<reference key="1">
    <citation type="journal article" date="1993" name="J. Biol. Chem.">
        <title>A novel form of cytochrome P-450 family 4 in human polymorphonuclear leukocytes. cDNA cloning and expression of leukotriene B4 omega-hydroxylase.</title>
        <authorList>
            <person name="Kikuta Y."/>
            <person name="Kusunose E."/>
            <person name="Endo K."/>
            <person name="Yamamoto S."/>
            <person name="Sogawa K."/>
            <person name="Fujii-Kuriyama Y."/>
            <person name="Kusunose M."/>
        </authorList>
    </citation>
    <scope>NUCLEOTIDE SEQUENCE [MRNA] (ISOFORM CYP4F3A)</scope>
    <scope>VARIANT ASP-269</scope>
    <scope>FUNCTION (ISOFORM CYP4F3A)</scope>
    <scope>CATALYTIC ACTIVITY (ISOFORM CYP4F3A)</scope>
    <source>
        <tissue>Leukocyte</tissue>
    </source>
</reference>
<reference key="2">
    <citation type="journal article" date="1998" name="DNA Cell Biol.">
        <title>Human leukotriene B4 omega-hydroxylase (CYP4F3) gene: molecular cloning and chromosomal localization.</title>
        <authorList>
            <person name="Kikuta Y."/>
            <person name="Kato M."/>
            <person name="Yamashita Y."/>
            <person name="Miyauchi Y."/>
            <person name="Tanaka K."/>
            <person name="Kamada N."/>
            <person name="Kusunose M."/>
        </authorList>
    </citation>
    <scope>NUCLEOTIDE SEQUENCE [GENOMIC DNA / MRNA] (ISOFORM CYP4F3A)</scope>
    <scope>VARIANT ASP-269</scope>
</reference>
<reference key="3">
    <citation type="submission" date="1998-03" db="EMBL/GenBank/DDBJ databases">
        <title>A novel form of cytochrome P-450 family 4 in human fetal liver.</title>
        <authorList>
            <person name="Peng X."/>
            <person name="Morgan K."/>
            <person name="Morgan T.R."/>
        </authorList>
    </citation>
    <scope>NUCLEOTIDE SEQUENCE [MRNA] (ISOFORM CYP4F3B)</scope>
    <source>
        <tissue>Fetal liver</tissue>
    </source>
</reference>
<reference key="4">
    <citation type="journal article" date="2004" name="Nat. Genet.">
        <title>Complete sequencing and characterization of 21,243 full-length human cDNAs.</title>
        <authorList>
            <person name="Ota T."/>
            <person name="Suzuki Y."/>
            <person name="Nishikawa T."/>
            <person name="Otsuki T."/>
            <person name="Sugiyama T."/>
            <person name="Irie R."/>
            <person name="Wakamatsu A."/>
            <person name="Hayashi K."/>
            <person name="Sato H."/>
            <person name="Nagai K."/>
            <person name="Kimura K."/>
            <person name="Makita H."/>
            <person name="Sekine M."/>
            <person name="Obayashi M."/>
            <person name="Nishi T."/>
            <person name="Shibahara T."/>
            <person name="Tanaka T."/>
            <person name="Ishii S."/>
            <person name="Yamamoto J."/>
            <person name="Saito K."/>
            <person name="Kawai Y."/>
            <person name="Isono Y."/>
            <person name="Nakamura Y."/>
            <person name="Nagahari K."/>
            <person name="Murakami K."/>
            <person name="Yasuda T."/>
            <person name="Iwayanagi T."/>
            <person name="Wagatsuma M."/>
            <person name="Shiratori A."/>
            <person name="Sudo H."/>
            <person name="Hosoiri T."/>
            <person name="Kaku Y."/>
            <person name="Kodaira H."/>
            <person name="Kondo H."/>
            <person name="Sugawara M."/>
            <person name="Takahashi M."/>
            <person name="Kanda K."/>
            <person name="Yokoi T."/>
            <person name="Furuya T."/>
            <person name="Kikkawa E."/>
            <person name="Omura Y."/>
            <person name="Abe K."/>
            <person name="Kamihara K."/>
            <person name="Katsuta N."/>
            <person name="Sato K."/>
            <person name="Tanikawa M."/>
            <person name="Yamazaki M."/>
            <person name="Ninomiya K."/>
            <person name="Ishibashi T."/>
            <person name="Yamashita H."/>
            <person name="Murakawa K."/>
            <person name="Fujimori K."/>
            <person name="Tanai H."/>
            <person name="Kimata M."/>
            <person name="Watanabe M."/>
            <person name="Hiraoka S."/>
            <person name="Chiba Y."/>
            <person name="Ishida S."/>
            <person name="Ono Y."/>
            <person name="Takiguchi S."/>
            <person name="Watanabe S."/>
            <person name="Yosida M."/>
            <person name="Hotuta T."/>
            <person name="Kusano J."/>
            <person name="Kanehori K."/>
            <person name="Takahashi-Fujii A."/>
            <person name="Hara H."/>
            <person name="Tanase T.-O."/>
            <person name="Nomura Y."/>
            <person name="Togiya S."/>
            <person name="Komai F."/>
            <person name="Hara R."/>
            <person name="Takeuchi K."/>
            <person name="Arita M."/>
            <person name="Imose N."/>
            <person name="Musashino K."/>
            <person name="Yuuki H."/>
            <person name="Oshima A."/>
            <person name="Sasaki N."/>
            <person name="Aotsuka S."/>
            <person name="Yoshikawa Y."/>
            <person name="Matsunawa H."/>
            <person name="Ichihara T."/>
            <person name="Shiohata N."/>
            <person name="Sano S."/>
            <person name="Moriya S."/>
            <person name="Momiyama H."/>
            <person name="Satoh N."/>
            <person name="Takami S."/>
            <person name="Terashima Y."/>
            <person name="Suzuki O."/>
            <person name="Nakagawa S."/>
            <person name="Senoh A."/>
            <person name="Mizoguchi H."/>
            <person name="Goto Y."/>
            <person name="Shimizu F."/>
            <person name="Wakebe H."/>
            <person name="Hishigaki H."/>
            <person name="Watanabe T."/>
            <person name="Sugiyama A."/>
            <person name="Takemoto M."/>
            <person name="Kawakami B."/>
            <person name="Yamazaki M."/>
            <person name="Watanabe K."/>
            <person name="Kumagai A."/>
            <person name="Itakura S."/>
            <person name="Fukuzumi Y."/>
            <person name="Fujimori Y."/>
            <person name="Komiyama M."/>
            <person name="Tashiro H."/>
            <person name="Tanigami A."/>
            <person name="Fujiwara T."/>
            <person name="Ono T."/>
            <person name="Yamada K."/>
            <person name="Fujii Y."/>
            <person name="Ozaki K."/>
            <person name="Hirao M."/>
            <person name="Ohmori Y."/>
            <person name="Kawabata A."/>
            <person name="Hikiji T."/>
            <person name="Kobatake N."/>
            <person name="Inagaki H."/>
            <person name="Ikema Y."/>
            <person name="Okamoto S."/>
            <person name="Okitani R."/>
            <person name="Kawakami T."/>
            <person name="Noguchi S."/>
            <person name="Itoh T."/>
            <person name="Shigeta K."/>
            <person name="Senba T."/>
            <person name="Matsumura K."/>
            <person name="Nakajima Y."/>
            <person name="Mizuno T."/>
            <person name="Morinaga M."/>
            <person name="Sasaki M."/>
            <person name="Togashi T."/>
            <person name="Oyama M."/>
            <person name="Hata H."/>
            <person name="Watanabe M."/>
            <person name="Komatsu T."/>
            <person name="Mizushima-Sugano J."/>
            <person name="Satoh T."/>
            <person name="Shirai Y."/>
            <person name="Takahashi Y."/>
            <person name="Nakagawa K."/>
            <person name="Okumura K."/>
            <person name="Nagase T."/>
            <person name="Nomura N."/>
            <person name="Kikuchi H."/>
            <person name="Masuho Y."/>
            <person name="Yamashita R."/>
            <person name="Nakai K."/>
            <person name="Yada T."/>
            <person name="Nakamura Y."/>
            <person name="Ohara O."/>
            <person name="Isogai T."/>
            <person name="Sugano S."/>
        </authorList>
    </citation>
    <scope>NUCLEOTIDE SEQUENCE [LARGE SCALE MRNA] (ISOFORM CYP4F3B)</scope>
    <source>
        <tissue>Tongue</tissue>
        <tissue>Trachea</tissue>
    </source>
</reference>
<reference key="5">
    <citation type="submission" date="2004-10" db="EMBL/GenBank/DDBJ databases">
        <authorList>
            <consortium name="SeattleSNPs variation discovery resource"/>
        </authorList>
    </citation>
    <scope>NUCLEOTIDE SEQUENCE [GENOMIC DNA]</scope>
    <scope>VARIANTS ASP-269; ILE-270 AND THR-271</scope>
</reference>
<reference key="6">
    <citation type="journal article" date="2004" name="Nature">
        <title>The DNA sequence and biology of human chromosome 19.</title>
        <authorList>
            <person name="Grimwood J."/>
            <person name="Gordon L.A."/>
            <person name="Olsen A.S."/>
            <person name="Terry A."/>
            <person name="Schmutz J."/>
            <person name="Lamerdin J.E."/>
            <person name="Hellsten U."/>
            <person name="Goodstein D."/>
            <person name="Couronne O."/>
            <person name="Tran-Gyamfi M."/>
            <person name="Aerts A."/>
            <person name="Altherr M."/>
            <person name="Ashworth L."/>
            <person name="Bajorek E."/>
            <person name="Black S."/>
            <person name="Branscomb E."/>
            <person name="Caenepeel S."/>
            <person name="Carrano A.V."/>
            <person name="Caoile C."/>
            <person name="Chan Y.M."/>
            <person name="Christensen M."/>
            <person name="Cleland C.A."/>
            <person name="Copeland A."/>
            <person name="Dalin E."/>
            <person name="Dehal P."/>
            <person name="Denys M."/>
            <person name="Detter J.C."/>
            <person name="Escobar J."/>
            <person name="Flowers D."/>
            <person name="Fotopulos D."/>
            <person name="Garcia C."/>
            <person name="Georgescu A.M."/>
            <person name="Glavina T."/>
            <person name="Gomez M."/>
            <person name="Gonzales E."/>
            <person name="Groza M."/>
            <person name="Hammon N."/>
            <person name="Hawkins T."/>
            <person name="Haydu L."/>
            <person name="Ho I."/>
            <person name="Huang W."/>
            <person name="Israni S."/>
            <person name="Jett J."/>
            <person name="Kadner K."/>
            <person name="Kimball H."/>
            <person name="Kobayashi A."/>
            <person name="Larionov V."/>
            <person name="Leem S.-H."/>
            <person name="Lopez F."/>
            <person name="Lou Y."/>
            <person name="Lowry S."/>
            <person name="Malfatti S."/>
            <person name="Martinez D."/>
            <person name="McCready P.M."/>
            <person name="Medina C."/>
            <person name="Morgan J."/>
            <person name="Nelson K."/>
            <person name="Nolan M."/>
            <person name="Ovcharenko I."/>
            <person name="Pitluck S."/>
            <person name="Pollard M."/>
            <person name="Popkie A.P."/>
            <person name="Predki P."/>
            <person name="Quan G."/>
            <person name="Ramirez L."/>
            <person name="Rash S."/>
            <person name="Retterer J."/>
            <person name="Rodriguez A."/>
            <person name="Rogers S."/>
            <person name="Salamov A."/>
            <person name="Salazar A."/>
            <person name="She X."/>
            <person name="Smith D."/>
            <person name="Slezak T."/>
            <person name="Solovyev V."/>
            <person name="Thayer N."/>
            <person name="Tice H."/>
            <person name="Tsai M."/>
            <person name="Ustaszewska A."/>
            <person name="Vo N."/>
            <person name="Wagner M."/>
            <person name="Wheeler J."/>
            <person name="Wu K."/>
            <person name="Xie G."/>
            <person name="Yang J."/>
            <person name="Dubchak I."/>
            <person name="Furey T.S."/>
            <person name="DeJong P."/>
            <person name="Dickson M."/>
            <person name="Gordon D."/>
            <person name="Eichler E.E."/>
            <person name="Pennacchio L.A."/>
            <person name="Richardson P."/>
            <person name="Stubbs L."/>
            <person name="Rokhsar D.S."/>
            <person name="Myers R.M."/>
            <person name="Rubin E.M."/>
            <person name="Lucas S.M."/>
        </authorList>
    </citation>
    <scope>NUCLEOTIDE SEQUENCE [LARGE SCALE GENOMIC DNA]</scope>
</reference>
<reference key="7">
    <citation type="submission" date="2005-07" db="EMBL/GenBank/DDBJ databases">
        <authorList>
            <person name="Mural R.J."/>
            <person name="Istrail S."/>
            <person name="Sutton G."/>
            <person name="Florea L."/>
            <person name="Halpern A.L."/>
            <person name="Mobarry C.M."/>
            <person name="Lippert R."/>
            <person name="Walenz B."/>
            <person name="Shatkay H."/>
            <person name="Dew I."/>
            <person name="Miller J.R."/>
            <person name="Flanigan M.J."/>
            <person name="Edwards N.J."/>
            <person name="Bolanos R."/>
            <person name="Fasulo D."/>
            <person name="Halldorsson B.V."/>
            <person name="Hannenhalli S."/>
            <person name="Turner R."/>
            <person name="Yooseph S."/>
            <person name="Lu F."/>
            <person name="Nusskern D.R."/>
            <person name="Shue B.C."/>
            <person name="Zheng X.H."/>
            <person name="Zhong F."/>
            <person name="Delcher A.L."/>
            <person name="Huson D.H."/>
            <person name="Kravitz S.A."/>
            <person name="Mouchard L."/>
            <person name="Reinert K."/>
            <person name="Remington K.A."/>
            <person name="Clark A.G."/>
            <person name="Waterman M.S."/>
            <person name="Eichler E.E."/>
            <person name="Adams M.D."/>
            <person name="Hunkapiller M.W."/>
            <person name="Myers E.W."/>
            <person name="Venter J.C."/>
        </authorList>
    </citation>
    <scope>NUCLEOTIDE SEQUENCE [LARGE SCALE GENOMIC DNA]</scope>
</reference>
<reference key="8">
    <citation type="journal article" date="2004" name="Genome Res.">
        <title>The status, quality, and expansion of the NIH full-length cDNA project: the Mammalian Gene Collection (MGC).</title>
        <authorList>
            <consortium name="The MGC Project Team"/>
        </authorList>
    </citation>
    <scope>NUCLEOTIDE SEQUENCE [LARGE SCALE MRNA] (ISOFORM CYP4F3B)</scope>
</reference>
<reference key="9">
    <citation type="journal article" date="1998" name="Arch. Biochem. Biophys.">
        <title>Purification and characterization of recombinant human neutrophil leukotriene B4 omega-hydroxylase (cytochrome P450 4F3).</title>
        <authorList>
            <person name="Kikuta Y."/>
            <person name="Kusunose E."/>
            <person name="Sumimoto H."/>
            <person name="Mizukami Y."/>
            <person name="Takeshige K."/>
            <person name="Sakaki T."/>
            <person name="Yabusaki Y."/>
            <person name="Kusunose M."/>
        </authorList>
    </citation>
    <scope>FUNCTION (ISOFORM CYP4F3A)</scope>
    <scope>CATALYTIC ACTIVITY (ISOFORM CYP4F3A)</scope>
    <scope>BIOPHYSICOCHEMICAL PROPERTIES (ISOFORM CYP4F3A)</scope>
    <scope>ACTIVITY REGULATION</scope>
    <scope>PATHWAY (ISOFORM CYP4F3A)</scope>
</reference>
<reference key="10">
    <citation type="journal article" date="1999" name="J. Biol. Chem.">
        <title>Expression of the CYP4F3 gene. tissue-specific splicing and alternative promoters generate high and low K(m) forms of leukotriene B(4) omega-hydroxylase.</title>
        <authorList>
            <person name="Christmas P."/>
            <person name="Ursino S.R."/>
            <person name="Fox J.W."/>
            <person name="Soberman R.J."/>
        </authorList>
    </citation>
    <scope>ALTERNATIVE SPLICING</scope>
    <scope>ALTERNATIVE PROMOTER USAGE</scope>
    <scope>SUBCELLULAR LOCATION</scope>
</reference>
<reference key="11">
    <citation type="journal article" date="2001" name="J. Biol. Chem.">
        <title>Alternative splicing determines the function of CYP4F3 by switching substrate specificity.</title>
        <authorList>
            <person name="Christmas P."/>
            <person name="Jones J.P."/>
            <person name="Patten C.J."/>
            <person name="Rock D.A."/>
            <person name="Zheng Y."/>
            <person name="Cheng S.M."/>
            <person name="Weber B.M."/>
            <person name="Carlesso N."/>
            <person name="Scadden D.T."/>
            <person name="Rettie A.E."/>
            <person name="Soberman R.J."/>
        </authorList>
    </citation>
    <scope>ALTERNATIVE SPLICING</scope>
    <scope>FUNCTION (ISOFORMS CYP4F3A AND CYP4F3B)</scope>
    <scope>CATALYTIC ACTIVITY (ISOFORMS CYP4F3A AND CYP4F3B)</scope>
    <scope>BIOPHYSICOCHEMICAL PROPERTIES (ISOFORMS CYP4F3A AND CYP4F3B)</scope>
    <scope>SUBSTRATE SPECIFICITY</scope>
    <scope>TISSUE SPECIFICITY (ISOFORMS CYP4F3A AND CYP4F3B)</scope>
    <scope>PATHWAY</scope>
</reference>
<reference key="12">
    <citation type="journal article" date="2004" name="J. Lipid Res.">
        <title>Human CYP4F3s are the main catalysts in the oxidation of fatty acid epoxides.</title>
        <authorList>
            <person name="Le Quere V."/>
            <person name="Plee-Gautier E."/>
            <person name="Potin P."/>
            <person name="Madec S."/>
            <person name="Salauen J.P."/>
        </authorList>
    </citation>
    <scope>FUNCTION (ISOFORMS CYP4F3A AND CYP4F3B)</scope>
    <scope>CATALYTIC ACTIVITY (ISOFORMS CYP4F3A AND CYP4F3B)</scope>
    <scope>BIOPHYSICOCHEMICAL PROPERTIES (ISOFORMS CYP4F3A AND CYP4F3B)</scope>
</reference>
<reference key="13">
    <citation type="journal article" date="2004" name="Toxicol. Appl. Pharmacol.">
        <title>Expression and characterization of human cytochrome P450 4F11: Putative role in the metabolism of therapeutic drugs and eicosanoids.</title>
        <authorList>
            <person name="Kalsotra A."/>
            <person name="Turman C.M."/>
            <person name="Kikuta Y."/>
            <person name="Strobel H.W."/>
        </authorList>
    </citation>
    <scope>FUNCTION (ISOFORM CYP4F3A)</scope>
    <scope>CATALYTIC ACTIVITY (ISOFORM CYP4F3A)</scope>
</reference>
<reference key="14">
    <citation type="journal article" date="2006" name="J. Biol. Chem.">
        <title>Omega-oxidation of very long-chain fatty acids in human liver microsomes. Implications for X-linked adrenoleukodystrophy.</title>
        <authorList>
            <person name="Sanders R.J."/>
            <person name="Ofman R."/>
            <person name="Duran M."/>
            <person name="Kemp S."/>
            <person name="Wanders R.J."/>
        </authorList>
    </citation>
    <scope>FUNCTION (ISOFORM CYP4F3B)</scope>
    <scope>CATALYTIC ACTIVITY (ISOFORM CYP4F3B)</scope>
    <scope>BIOPHYSICOCHEMICAL PROPERTIES (ISOFORM CYP4F3B)</scope>
</reference>
<reference key="15">
    <citation type="journal article" date="2006" name="Prostaglandins Leukot. Essent. Fatty Acids">
        <title>Oxygenation of omega-3 fatty acids by human cytochrome P450 4F3B: effect on 20-hydroxyeicosatetraenoic acid production.</title>
        <authorList>
            <person name="Harmon S.D."/>
            <person name="Fang X."/>
            <person name="Kaduce T.L."/>
            <person name="Hu S."/>
            <person name="Raj Gopal V."/>
            <person name="Falck J.R."/>
            <person name="Spector A.A."/>
        </authorList>
    </citation>
    <scope>FUNCTION (ISOFORM CYP4F3B)</scope>
    <scope>CATALYTIC ACTIVITY (ISOFORM CYP4F3B)</scope>
</reference>
<reference key="16">
    <citation type="journal article" date="2008" name="FASEB J.">
        <title>Characterization of the human omega-oxidation pathway for omega-hydroxy-very-long-chain fatty acids.</title>
        <authorList>
            <person name="Sanders R.J."/>
            <person name="Ofman R."/>
            <person name="Dacremont G."/>
            <person name="Wanders R.J."/>
            <person name="Kemp S."/>
        </authorList>
    </citation>
    <scope>FUNCTION (ISOFORMS CYP4F3A AND CYP4F3B)</scope>
    <scope>CATALYTIC ACTIVITY (ISOFORMS CYP4F3A AND CYP4F3B)</scope>
    <scope>BIOPHYSICOCHEMICAL PROPERTIES (ISOFORMS CYP4F3A AND CYP4F3B)</scope>
</reference>
<reference key="17">
    <citation type="journal article" date="2008" name="J. Lipid Res.">
        <title>Omega oxidation of 3-hydroxy fatty acids by the human CYP4F gene subfamily enzyme CYP4F11.</title>
        <authorList>
            <person name="Dhar M."/>
            <person name="Sepkovic D.W."/>
            <person name="Hirani V."/>
            <person name="Magnusson R.P."/>
            <person name="Lasker J.M."/>
        </authorList>
    </citation>
    <scope>FUNCTION (ISOFORM CYP4F3B)</scope>
    <scope>CATALYTIC ACTIVITY (ISOFORM CYP4F3B)</scope>
</reference>
<reference key="18">
    <citation type="journal article" date="2008" name="J. Lipid Res.">
        <title>Cytochromes P450 from family 4 are the main omega hydroxylating enzymes in humans: CYP4F3B is the prominent player in PUFA metabolism.</title>
        <authorList>
            <person name="Fer M."/>
            <person name="Corcos L."/>
            <person name="Dreano Y."/>
            <person name="Plee-Gautier E."/>
            <person name="Salaun J.P."/>
            <person name="Berthou F."/>
            <person name="Amet Y."/>
        </authorList>
    </citation>
    <scope>FUNCTION (ISOFORMS CYP4F3A AND CYP4F3B)</scope>
    <scope>CATALYTIC ACTIVITY (ISOFORMS CYP4F3A AND CYP4F3B)</scope>
</reference>
<dbReference type="EC" id="1.14.14.1" evidence="3 7 11"/>
<dbReference type="EC" id="1.14.14.79" evidence="7 10"/>
<dbReference type="EC" id="1.14.14.94" evidence="3 5 11 13"/>
<dbReference type="EMBL" id="D12620">
    <property type="protein sequence ID" value="BAA02144.1"/>
    <property type="molecule type" value="mRNA"/>
</dbReference>
<dbReference type="EMBL" id="D12621">
    <property type="protein sequence ID" value="BAA02145.1"/>
    <property type="molecule type" value="mRNA"/>
</dbReference>
<dbReference type="EMBL" id="AB002454">
    <property type="protein sequence ID" value="BAA25990.1"/>
    <property type="molecule type" value="mRNA"/>
</dbReference>
<dbReference type="EMBL" id="AB002461">
    <property type="protein sequence ID" value="BAA25991.1"/>
    <property type="molecule type" value="Genomic_DNA"/>
</dbReference>
<dbReference type="EMBL" id="AF054821">
    <property type="protein sequence ID" value="AAC08589.1"/>
    <property type="molecule type" value="mRNA"/>
</dbReference>
<dbReference type="EMBL" id="AK304200">
    <property type="protein sequence ID" value="BAH14129.1"/>
    <property type="molecule type" value="mRNA"/>
</dbReference>
<dbReference type="EMBL" id="AK316136">
    <property type="protein sequence ID" value="BAH14507.1"/>
    <property type="molecule type" value="mRNA"/>
</dbReference>
<dbReference type="EMBL" id="AY792513">
    <property type="protein sequence ID" value="AAV40834.1"/>
    <property type="molecule type" value="Genomic_DNA"/>
</dbReference>
<dbReference type="EMBL" id="AD000685">
    <property type="status" value="NOT_ANNOTATED_CDS"/>
    <property type="molecule type" value="Genomic_DNA"/>
</dbReference>
<dbReference type="EMBL" id="CH471106">
    <property type="protein sequence ID" value="EAW84489.1"/>
    <property type="molecule type" value="Genomic_DNA"/>
</dbReference>
<dbReference type="EMBL" id="BC136299">
    <property type="protein sequence ID" value="AAI36300.1"/>
    <property type="molecule type" value="mRNA"/>
</dbReference>
<dbReference type="CCDS" id="CCDS12332.1">
    <molecule id="Q08477-1"/>
</dbReference>
<dbReference type="CCDS" id="CCDS59362.1">
    <molecule id="Q08477-2"/>
</dbReference>
<dbReference type="PIR" id="A46661">
    <property type="entry name" value="A46661"/>
</dbReference>
<dbReference type="RefSeq" id="NP_000887.2">
    <molecule id="Q08477-1"/>
    <property type="nucleotide sequence ID" value="NM_000896.3"/>
</dbReference>
<dbReference type="RefSeq" id="NP_001186137.1">
    <molecule id="Q08477-2"/>
    <property type="nucleotide sequence ID" value="NM_001199208.2"/>
</dbReference>
<dbReference type="RefSeq" id="NP_001186138.1">
    <molecule id="Q08477-2"/>
    <property type="nucleotide sequence ID" value="NM_001199209.2"/>
</dbReference>
<dbReference type="RefSeq" id="NP_001356625.1">
    <molecule id="Q08477-2"/>
    <property type="nucleotide sequence ID" value="NM_001369696.1"/>
</dbReference>
<dbReference type="RefSeq" id="XP_016882303.1">
    <property type="nucleotide sequence ID" value="XM_017026814.1"/>
</dbReference>
<dbReference type="SMR" id="Q08477"/>
<dbReference type="BioGRID" id="110229">
    <property type="interactions" value="8"/>
</dbReference>
<dbReference type="FunCoup" id="Q08477">
    <property type="interactions" value="293"/>
</dbReference>
<dbReference type="IntAct" id="Q08477">
    <property type="interactions" value="5"/>
</dbReference>
<dbReference type="STRING" id="9606.ENSP00000221307"/>
<dbReference type="BindingDB" id="Q08477"/>
<dbReference type="ChEMBL" id="CHEMBL3508692"/>
<dbReference type="DrugBank" id="DB12016">
    <property type="generic name" value="Ponesimod"/>
</dbReference>
<dbReference type="SwissLipids" id="SLP:000000422">
    <molecule id="Q08477-1"/>
</dbReference>
<dbReference type="SwissLipids" id="SLP:000000423">
    <molecule id="Q08477-2"/>
</dbReference>
<dbReference type="iPTMnet" id="Q08477"/>
<dbReference type="PhosphoSitePlus" id="Q08477"/>
<dbReference type="SwissPalm" id="Q08477"/>
<dbReference type="BioMuta" id="CYP4F3"/>
<dbReference type="DMDM" id="56757430"/>
<dbReference type="jPOST" id="Q08477"/>
<dbReference type="MassIVE" id="Q08477"/>
<dbReference type="PaxDb" id="9606-ENSP00000221307"/>
<dbReference type="PeptideAtlas" id="Q08477"/>
<dbReference type="ProteomicsDB" id="58614">
    <molecule id="Q08477-1"/>
</dbReference>
<dbReference type="Pumba" id="Q08477"/>
<dbReference type="Antibodypedia" id="27108">
    <property type="antibodies" value="130 antibodies from 26 providers"/>
</dbReference>
<dbReference type="DNASU" id="4051"/>
<dbReference type="Ensembl" id="ENST00000221307.13">
    <molecule id="Q08477-1"/>
    <property type="protein sequence ID" value="ENSP00000221307.6"/>
    <property type="gene ID" value="ENSG00000186529.16"/>
</dbReference>
<dbReference type="Ensembl" id="ENST00000585846.1">
    <molecule id="Q08477-2"/>
    <property type="protein sequence ID" value="ENSP00000468105.1"/>
    <property type="gene ID" value="ENSG00000186529.16"/>
</dbReference>
<dbReference type="Ensembl" id="ENST00000586182.6">
    <molecule id="Q08477-2"/>
    <property type="protein sequence ID" value="ENSP00000466395.1"/>
    <property type="gene ID" value="ENSG00000186529.16"/>
</dbReference>
<dbReference type="Ensembl" id="ENST00000591058.5">
    <molecule id="Q08477-2"/>
    <property type="protein sequence ID" value="ENSP00000466988.1"/>
    <property type="gene ID" value="ENSG00000186529.16"/>
</dbReference>
<dbReference type="GeneID" id="4051"/>
<dbReference type="KEGG" id="hsa:4051"/>
<dbReference type="MANE-Select" id="ENST00000221307.13">
    <property type="protein sequence ID" value="ENSP00000221307.6"/>
    <property type="RefSeq nucleotide sequence ID" value="NM_000896.3"/>
    <property type="RefSeq protein sequence ID" value="NP_000887.2"/>
</dbReference>
<dbReference type="UCSC" id="uc002nbj.4">
    <molecule id="Q08477-1"/>
    <property type="organism name" value="human"/>
</dbReference>
<dbReference type="AGR" id="HGNC:2646"/>
<dbReference type="CTD" id="4051"/>
<dbReference type="DisGeNET" id="4051"/>
<dbReference type="GeneCards" id="CYP4F3"/>
<dbReference type="HGNC" id="HGNC:2646">
    <property type="gene designation" value="CYP4F3"/>
</dbReference>
<dbReference type="HPA" id="ENSG00000186529">
    <property type="expression patterns" value="Group enriched (bone marrow, liver)"/>
</dbReference>
<dbReference type="MIM" id="601270">
    <property type="type" value="gene"/>
</dbReference>
<dbReference type="neXtProt" id="NX_Q08477"/>
<dbReference type="OpenTargets" id="ENSG00000186529"/>
<dbReference type="PharmGKB" id="PA234"/>
<dbReference type="VEuPathDB" id="HostDB:ENSG00000186529"/>
<dbReference type="eggNOG" id="KOG0157">
    <property type="taxonomic scope" value="Eukaryota"/>
</dbReference>
<dbReference type="GeneTree" id="ENSGT00940000163407"/>
<dbReference type="InParanoid" id="Q08477"/>
<dbReference type="OMA" id="VGYDAQM"/>
<dbReference type="OrthoDB" id="1470350at2759"/>
<dbReference type="PAN-GO" id="Q08477">
    <property type="GO annotations" value="7 GO annotations based on evolutionary models"/>
</dbReference>
<dbReference type="PhylomeDB" id="Q08477"/>
<dbReference type="TreeFam" id="TF105088"/>
<dbReference type="BioCyc" id="MetaCyc:MONOMER66-44222"/>
<dbReference type="BRENDA" id="1.14.14.79">
    <property type="organism ID" value="2681"/>
</dbReference>
<dbReference type="BRENDA" id="1.14.14.94">
    <property type="organism ID" value="2681"/>
</dbReference>
<dbReference type="PathwayCommons" id="Q08477"/>
<dbReference type="Reactome" id="R-HSA-211935">
    <property type="pathway name" value="Fatty acids"/>
</dbReference>
<dbReference type="Reactome" id="R-HSA-211958">
    <property type="pathway name" value="Miscellaneous substrates"/>
</dbReference>
<dbReference type="Reactome" id="R-HSA-211979">
    <property type="pathway name" value="Eicosanoids"/>
</dbReference>
<dbReference type="Reactome" id="R-HSA-2142691">
    <property type="pathway name" value="Synthesis of Leukotrienes (LT) and Eoxins (EX)"/>
</dbReference>
<dbReference type="SABIO-RK" id="Q08477"/>
<dbReference type="SignaLink" id="Q08477"/>
<dbReference type="UniPathway" id="UPA00383"/>
<dbReference type="UniPathway" id="UPA00883"/>
<dbReference type="BioGRID-ORCS" id="4051">
    <property type="hits" value="11 hits in 1150 CRISPR screens"/>
</dbReference>
<dbReference type="ChiTaRS" id="CYP4F3">
    <property type="organism name" value="human"/>
</dbReference>
<dbReference type="GeneWiki" id="CYP4F3"/>
<dbReference type="GenomeRNAi" id="4051"/>
<dbReference type="Pharos" id="Q08477">
    <property type="development level" value="Tbio"/>
</dbReference>
<dbReference type="PRO" id="PR:Q08477"/>
<dbReference type="Proteomes" id="UP000005640">
    <property type="component" value="Chromosome 19"/>
</dbReference>
<dbReference type="RNAct" id="Q08477">
    <property type="molecule type" value="protein"/>
</dbReference>
<dbReference type="Bgee" id="ENSG00000186529">
    <property type="expression patterns" value="Expressed in right lobe of liver and 119 other cell types or tissues"/>
</dbReference>
<dbReference type="ExpressionAtlas" id="Q08477">
    <property type="expression patterns" value="baseline and differential"/>
</dbReference>
<dbReference type="GO" id="GO:0005789">
    <property type="term" value="C:endoplasmic reticulum membrane"/>
    <property type="evidence" value="ECO:0000304"/>
    <property type="project" value="Reactome"/>
</dbReference>
<dbReference type="GO" id="GO:0097259">
    <property type="term" value="F:20-aldehyde-leukotriene B4 20-monooxygenase activity"/>
    <property type="evidence" value="ECO:0000314"/>
    <property type="project" value="UniProtKB"/>
</dbReference>
<dbReference type="GO" id="GO:0097258">
    <property type="term" value="F:20-hydroxy-leukotriene B4 omega oxidase activity"/>
    <property type="evidence" value="ECO:0000314"/>
    <property type="project" value="UniProtKB"/>
</dbReference>
<dbReference type="GO" id="GO:0052869">
    <property type="term" value="F:arachidonate omega-hydroxylase activity"/>
    <property type="evidence" value="ECO:0007669"/>
    <property type="project" value="RHEA"/>
</dbReference>
<dbReference type="GO" id="GO:0020037">
    <property type="term" value="F:heme binding"/>
    <property type="evidence" value="ECO:0007669"/>
    <property type="project" value="InterPro"/>
</dbReference>
<dbReference type="GO" id="GO:0005506">
    <property type="term" value="F:iron ion binding"/>
    <property type="evidence" value="ECO:0007669"/>
    <property type="project" value="InterPro"/>
</dbReference>
<dbReference type="GO" id="GO:0050051">
    <property type="term" value="F:leukotriene-B4 20-monooxygenase activity"/>
    <property type="evidence" value="ECO:0000314"/>
    <property type="project" value="UniProtKB"/>
</dbReference>
<dbReference type="GO" id="GO:0120319">
    <property type="term" value="F:long-chain fatty acid omega-1 hydroxylase activity"/>
    <property type="evidence" value="ECO:0000314"/>
    <property type="project" value="UniProtKB"/>
</dbReference>
<dbReference type="GO" id="GO:0102033">
    <property type="term" value="F:long-chain fatty acid omega-hydroxylase activity"/>
    <property type="evidence" value="ECO:0000314"/>
    <property type="project" value="UniProtKB"/>
</dbReference>
<dbReference type="GO" id="GO:0004497">
    <property type="term" value="F:monooxygenase activity"/>
    <property type="evidence" value="ECO:0000304"/>
    <property type="project" value="Reactome"/>
</dbReference>
<dbReference type="GO" id="GO:0140692">
    <property type="term" value="F:very long-chain fatty acid omega-hydroxylase activity"/>
    <property type="evidence" value="ECO:0000314"/>
    <property type="project" value="UniProtKB"/>
</dbReference>
<dbReference type="GO" id="GO:0019369">
    <property type="term" value="P:arachidonate metabolic process"/>
    <property type="evidence" value="ECO:0000318"/>
    <property type="project" value="GO_Central"/>
</dbReference>
<dbReference type="GO" id="GO:0010430">
    <property type="term" value="P:fatty acid omega-oxidation"/>
    <property type="evidence" value="ECO:0000314"/>
    <property type="project" value="UniProtKB"/>
</dbReference>
<dbReference type="GO" id="GO:0006690">
    <property type="term" value="P:icosanoid metabolic process"/>
    <property type="evidence" value="ECO:0000304"/>
    <property type="project" value="Reactome"/>
</dbReference>
<dbReference type="GO" id="GO:0036101">
    <property type="term" value="P:leukotriene B4 catabolic process"/>
    <property type="evidence" value="ECO:0000314"/>
    <property type="project" value="UniProtKB"/>
</dbReference>
<dbReference type="GO" id="GO:0006691">
    <property type="term" value="P:leukotriene metabolic process"/>
    <property type="evidence" value="ECO:0000304"/>
    <property type="project" value="Reactome"/>
</dbReference>
<dbReference type="GO" id="GO:2001302">
    <property type="term" value="P:lipoxin A4 metabolic process"/>
    <property type="evidence" value="ECO:0000314"/>
    <property type="project" value="UniProtKB"/>
</dbReference>
<dbReference type="GO" id="GO:2001304">
    <property type="term" value="P:lipoxin B4 metabolic process"/>
    <property type="evidence" value="ECO:0000314"/>
    <property type="project" value="UniProtKB"/>
</dbReference>
<dbReference type="GO" id="GO:0042361">
    <property type="term" value="P:menaquinone catabolic process"/>
    <property type="evidence" value="ECO:0000318"/>
    <property type="project" value="GO_Central"/>
</dbReference>
<dbReference type="GO" id="GO:0097267">
    <property type="term" value="P:omega-hydroxylase P450 pathway"/>
    <property type="evidence" value="ECO:0000314"/>
    <property type="project" value="UniProtKB"/>
</dbReference>
<dbReference type="GO" id="GO:0042376">
    <property type="term" value="P:phylloquinone catabolic process"/>
    <property type="evidence" value="ECO:0000318"/>
    <property type="project" value="GO_Central"/>
</dbReference>
<dbReference type="CDD" id="cd20679">
    <property type="entry name" value="CYP4F"/>
    <property type="match status" value="1"/>
</dbReference>
<dbReference type="FunFam" id="1.10.630.10:FF:000005">
    <property type="entry name" value="cytochrome P450 4F22 isoform X2"/>
    <property type="match status" value="1"/>
</dbReference>
<dbReference type="Gene3D" id="1.10.630.10">
    <property type="entry name" value="Cytochrome P450"/>
    <property type="match status" value="1"/>
</dbReference>
<dbReference type="InterPro" id="IPR001128">
    <property type="entry name" value="Cyt_P450"/>
</dbReference>
<dbReference type="InterPro" id="IPR017972">
    <property type="entry name" value="Cyt_P450_CS"/>
</dbReference>
<dbReference type="InterPro" id="IPR002401">
    <property type="entry name" value="Cyt_P450_E_grp-I"/>
</dbReference>
<dbReference type="InterPro" id="IPR036396">
    <property type="entry name" value="Cyt_P450_sf"/>
</dbReference>
<dbReference type="InterPro" id="IPR050196">
    <property type="entry name" value="Cytochrome_P450_Monoox"/>
</dbReference>
<dbReference type="PANTHER" id="PTHR24291:SF198">
    <property type="entry name" value="CYTOCHROME P450 4F3"/>
    <property type="match status" value="1"/>
</dbReference>
<dbReference type="PANTHER" id="PTHR24291">
    <property type="entry name" value="CYTOCHROME P450 FAMILY 4"/>
    <property type="match status" value="1"/>
</dbReference>
<dbReference type="Pfam" id="PF00067">
    <property type="entry name" value="p450"/>
    <property type="match status" value="1"/>
</dbReference>
<dbReference type="PRINTS" id="PR00463">
    <property type="entry name" value="EP450I"/>
</dbReference>
<dbReference type="PRINTS" id="PR00385">
    <property type="entry name" value="P450"/>
</dbReference>
<dbReference type="SUPFAM" id="SSF48264">
    <property type="entry name" value="Cytochrome P450"/>
    <property type="match status" value="1"/>
</dbReference>
<dbReference type="PROSITE" id="PS00086">
    <property type="entry name" value="CYTOCHROME_P450"/>
    <property type="match status" value="1"/>
</dbReference>
<accession>Q08477</accession>
<accession>B7Z8Z3</accession>
<accession>O60634</accession>
<accession>Q5U740</accession>
<feature type="chain" id="PRO_0000051851" description="Cytochrome P450 4F3">
    <location>
        <begin position="1"/>
        <end position="520"/>
    </location>
</feature>
<feature type="transmembrane region" description="Helical" evidence="2">
    <location>
        <begin position="11"/>
        <end position="31"/>
    </location>
</feature>
<feature type="binding site" description="covalent" evidence="1">
    <location>
        <position position="328"/>
    </location>
    <ligand>
        <name>heme</name>
        <dbReference type="ChEBI" id="CHEBI:30413"/>
    </ligand>
</feature>
<feature type="binding site" description="axial binding residue" evidence="1">
    <location>
        <position position="468"/>
    </location>
    <ligand>
        <name>heme</name>
        <dbReference type="ChEBI" id="CHEBI:30413"/>
    </ligand>
    <ligandPart>
        <name>Fe</name>
        <dbReference type="ChEBI" id="CHEBI:18248"/>
    </ligandPart>
</feature>
<feature type="splice variant" id="VSP_047193" description="In isoform CYP4F3B." evidence="16 17 19">
    <original>IHSSEEGLLYTQSLACTFGDMCCWWVGPWHAIVRIFHPTYIKPVLFAP</original>
    <variation>VTPTEQGMRVLTQLVATYPQGFKVWMGPIFPVIRFCHPNIIRSVINAS</variation>
    <location>
        <begin position="67"/>
        <end position="114"/>
    </location>
</feature>
<feature type="sequence variant" id="VAR_048457" description="In dbSNP:rs34923393.">
    <original>H</original>
    <variation>Q</variation>
    <location>
        <position position="96"/>
    </location>
</feature>
<feature type="sequence variant" id="VAR_048458" description="In dbSNP:rs35888783.">
    <original>Y</original>
    <variation>C</variation>
    <location>
        <position position="106"/>
    </location>
</feature>
<feature type="sequence variant" id="VAR_001258" description="In dbSNP:rs1805040." evidence="11 12 14">
    <original>A</original>
    <variation>D</variation>
    <location>
        <position position="269"/>
    </location>
</feature>
<feature type="sequence variant" id="VAR_020664" description="In dbSNP:rs28371536." evidence="14">
    <original>V</original>
    <variation>I</variation>
    <location>
        <position position="270"/>
    </location>
</feature>
<feature type="sequence variant" id="VAR_020665" description="In dbSNP:rs28371479." evidence="14">
    <original>I</original>
    <variation>T</variation>
    <location>
        <position position="271"/>
    </location>
</feature>
<feature type="sequence conflict" description="In Ref. 3; AAC08589." evidence="20" ref="3">
    <original>EGS</original>
    <variation>KGY</variation>
    <location>
        <begin position="184"/>
        <end position="186"/>
    </location>
</feature>
<feature type="sequence conflict" description="In Ref. 1; BAA02144 and 2; BAA25990/BAA25991." evidence="20" ref="1 2">
    <original>R</original>
    <variation>A</variation>
    <location>
        <position position="488"/>
    </location>
</feature>
<feature type="sequence conflict" description="In Ref. 3; AAC08589." evidence="20" ref="3">
    <original>L</original>
    <variation>I</variation>
    <location>
        <position position="512"/>
    </location>
</feature>
<proteinExistence type="evidence at protein level"/>
<sequence length="520" mass="59847">MPQLSLSSLGLWPMAASPWLLLLLVGASWLLARILAWTYTFYDNCCRLRCFPQPPKRNWFLGHLGLIHSSEEGLLYTQSLACTFGDMCCWWVGPWHAIVRIFHPTYIKPVLFAPAAIVPKDKVFYSFLKPWLGDGLLLSAGEKWSRHRRMLTPAFHFNILKPYMKIFNESVNIMHAKWQLLASEGSARLDMFEHISLMTLDSLQKCVFSFDSHCQEKPSEYIAAILELSALVTKRHQQILLYIDFLYYLTPDGQRFRRACRLVHDFTDAVIQERRRTLPSQGVDDFLQAKAKSKTLDFIDVLLLSKDEDGKKLSDEDIRAEADTFMFEGHDTTASGLSWVLYHLAKHPEYQERCRQEVQELLKDREPKEIEWDDLAQLPFLTMCIKESLRLHPPVPAVSRCCTQDIVLPDGRVIPKGIICLISVFGTHHNPAVWPDPEVYDPFRFDPKNIKERSPLAFIPFSAGPRNCIGQAFAMAEMKVVLGLTLLRFRVLPDHTEPRRKPELVLRAEGGLWLRVEPLS</sequence>
<organism>
    <name type="scientific">Homo sapiens</name>
    <name type="common">Human</name>
    <dbReference type="NCBI Taxonomy" id="9606"/>
    <lineage>
        <taxon>Eukaryota</taxon>
        <taxon>Metazoa</taxon>
        <taxon>Chordata</taxon>
        <taxon>Craniata</taxon>
        <taxon>Vertebrata</taxon>
        <taxon>Euteleostomi</taxon>
        <taxon>Mammalia</taxon>
        <taxon>Eutheria</taxon>
        <taxon>Euarchontoglires</taxon>
        <taxon>Primates</taxon>
        <taxon>Haplorrhini</taxon>
        <taxon>Catarrhini</taxon>
        <taxon>Hominidae</taxon>
        <taxon>Homo</taxon>
    </lineage>
</organism>
<evidence type="ECO:0000250" key="1">
    <source>
        <dbReference type="UniProtKB" id="P51869"/>
    </source>
</evidence>
<evidence type="ECO:0000255" key="2"/>
<evidence type="ECO:0000269" key="3">
    <source>
    </source>
</evidence>
<evidence type="ECO:0000269" key="4">
    <source>
    </source>
</evidence>
<evidence type="ECO:0000269" key="5">
    <source>
    </source>
</evidence>
<evidence type="ECO:0000269" key="6">
    <source>
    </source>
</evidence>
<evidence type="ECO:0000269" key="7">
    <source>
    </source>
</evidence>
<evidence type="ECO:0000269" key="8">
    <source>
    </source>
</evidence>
<evidence type="ECO:0000269" key="9">
    <source>
    </source>
</evidence>
<evidence type="ECO:0000269" key="10">
    <source>
    </source>
</evidence>
<evidence type="ECO:0000269" key="11">
    <source>
    </source>
</evidence>
<evidence type="ECO:0000269" key="12">
    <source>
    </source>
</evidence>
<evidence type="ECO:0000269" key="13">
    <source>
    </source>
</evidence>
<evidence type="ECO:0000269" key="14">
    <source ref="5"/>
</evidence>
<evidence type="ECO:0000303" key="15">
    <source>
    </source>
</evidence>
<evidence type="ECO:0000303" key="16">
    <source>
    </source>
</evidence>
<evidence type="ECO:0000303" key="17">
    <source>
    </source>
</evidence>
<evidence type="ECO:0000303" key="18">
    <source>
    </source>
</evidence>
<evidence type="ECO:0000303" key="19">
    <source ref="3"/>
</evidence>
<evidence type="ECO:0000305" key="20"/>
<evidence type="ECO:0000305" key="21">
    <source>
    </source>
</evidence>
<evidence type="ECO:0000305" key="22">
    <source>
    </source>
</evidence>
<evidence type="ECO:0000305" key="23">
    <source>
    </source>
</evidence>
<evidence type="ECO:0000305" key="24">
    <source>
    </source>
</evidence>
<evidence type="ECO:0000305" key="25">
    <source>
    </source>
</evidence>
<evidence type="ECO:0000305" key="26">
    <source>
    </source>
</evidence>
<evidence type="ECO:0000305" key="27">
    <source>
    </source>
</evidence>
<evidence type="ECO:0000305" key="28">
    <source>
    </source>
</evidence>
<evidence type="ECO:0000305" key="29">
    <source>
    </source>
</evidence>
<evidence type="ECO:0000305" key="30">
    <source>
    </source>
</evidence>
<evidence type="ECO:0000305" key="31">
    <source>
    </source>
</evidence>
<evidence type="ECO:0000312" key="32">
    <source>
        <dbReference type="HGNC" id="HGNC:2646"/>
    </source>
</evidence>
<name>CP4F3_HUMAN</name>
<gene>
    <name evidence="18 32" type="primary">CYP4F3</name>
    <name type="synonym">LTB4H</name>
</gene>
<protein>
    <recommendedName>
        <fullName>Cytochrome P450 4F3</fullName>
        <ecNumber evidence="3 7 11">1.14.14.1</ecNumber>
    </recommendedName>
    <alternativeName>
        <fullName evidence="15">20-hydroxyeicosatetraenoic acid synthase</fullName>
        <shortName evidence="15">20-HETE synthase</shortName>
    </alternativeName>
    <alternativeName>
        <fullName>CYPIVF3</fullName>
    </alternativeName>
    <alternativeName>
        <fullName>Cytochrome P450-LTB-omega</fullName>
    </alternativeName>
    <alternativeName>
        <fullName evidence="26">Docosahexaenoic acid omega-hydroxylase CYP4F3</fullName>
        <ecNumber evidence="7 10">1.14.14.79</ecNumber>
    </alternativeName>
    <alternativeName>
        <fullName>Leukotriene-B(4) 20-monooxygenase 2</fullName>
    </alternativeName>
    <alternativeName>
        <fullName>Leukotriene-B(4) omega-hydroxylase 2</fullName>
        <ecNumber evidence="3 5 11 13">1.14.14.94</ecNumber>
    </alternativeName>
</protein>
<comment type="function">
    <text evidence="3 4 5 6 7 8 9 10 11 13">A cytochrome P450 monooxygenase involved in the metabolism of various endogenous substrates, including fatty acids and their oxygenated derivatives (oxylipins) (PubMed:11461919, PubMed:15145985, PubMed:16547005, PubMed:16820285, PubMed:18065749, PubMed:18182499, PubMed:18577768, PubMed:8486631, PubMed:9675028). Mechanistically, uses molecular oxygen inserting one oxygen atom into a substrate, and reducing the second into a water molecule, with two electrons provided by NADPH via cytochrome P450 reductase (CPR; NADPH-ferrihemoprotein reductase) (PubMed:9675028). May play a role in inactivation of pro-inflammatory and anti-inflammatory oxylipins during the resolution of inflammation (PubMed:11461919, PubMed:15145985, PubMed:15364545, PubMed:16547005, PubMed:16820285, PubMed:18065749, PubMed:18182499, PubMed:18577768, PubMed:8486631, PubMed:9675028).</text>
</comment>
<comment type="function">
    <molecule>Isoform CYP4F3A</molecule>
    <text evidence="3 4 5 9 10 11 13">Catalyzes predominantly the oxidation of the terminal carbon (omega-oxidation) of oxylipins in myeloid cells, displaying higher affinity for arachidonate metabolite leukotriene B4 (LTB4) (PubMed:11461919, PubMed:15364545, PubMed:8486631, PubMed:9675028). Inactivates LTB4 via three successive oxidative transformations to 20-hydroxy-LTB4, then to 20-oxo-LTB4 and to 20-carboxy-LTB4 (PubMed:9675028). Has omega-hydroxylase activity toward long-chain fatty acid epoxides with preference for 8,9-epoxy-(5Z,11Z,14Z)-eicosatrienoate (EET) and 9,10-epoxyoctadecanoate (PubMed:15145985). Omega-hydroxylates monohydroxy polyunsaturated fatty acids (PUFAs), including hydroxyeicosatetraenoates (HETEs) and hydroxyeicosapentaenoates (HEPEs), to dihydroxy compounds (PubMed:15364545, PubMed:9675028). Contributes to the degradation of saturated very long-chain fatty acids (VLCFAs) such as docosanoic acid, by catalyzing successive omega-oxidations to the corresponding dicarboxylic acid, thereby initiating chain shortening (PubMed:18182499). Has low hydroxylase activity toward PUFAs (PubMed:11461919, PubMed:18577768).</text>
</comment>
<comment type="function">
    <molecule>Isoform CYP4F3B</molecule>
    <text evidence="3 4 6 7 8 9 10">Catalyzes predominantly the oxidation of the terminal carbon (omega-oxidation) of polyunsaturated fatty acids (PUFAs) (PubMed:11461919, PubMed:16820285, PubMed:18577768). Participates in the conversion of arachidonic acid to 20-hydroxyeicosatetraenoic acid (20-HETE), a signaling molecule acting both as vasoconstrictive and natriuretic with overall effect on arterial blood pressure (PubMed:11461919, PubMed:16820285, PubMed:18577768). Has high omega-hydroxylase activity toward other PUFAs, including eicosatrienoic acid (ETA), eicosapentaenoic acid (EPA) and docosahexaenoic acid (DHA) (PubMed:16820285, PubMed:18577768). Can also catalyze the oxidation of the penultimate carbon (omega-1 oxidation) of PUFAs with lower efficiency (PubMed:18577768). Contributes to the degradation of saturated very long-chain fatty acids (VLCFAs) such as docosanoic acid and hexacosanoic acid, by catalyzing successive omega-oxidations to the corresponding dicarboxylic acids, thereby initiating chain shortening (PubMed:16547005, PubMed:18182499). Omega-hydroxylates long-chain 3-hydroxy fatty acids, likely initiating the oxidative conversion to the corresponding 3-hydroxydicarboxylic fatty acids (PubMed:18065749). Has omega-hydroxylase activity toward long-chain fatty acid epoxides with preference for 8,9-epoxy-(5Z,11Z,14Z)-eicosatrienoate (EET) and 9,10-epoxyoctadecanoate (PubMed:15145985).</text>
</comment>
<comment type="catalytic activity">
    <reaction evidence="3 7 11">
        <text>an organic molecule + reduced [NADPH--hemoprotein reductase] + O2 = an alcohol + oxidized [NADPH--hemoprotein reductase] + H2O + H(+)</text>
        <dbReference type="Rhea" id="RHEA:17149"/>
        <dbReference type="Rhea" id="RHEA-COMP:11964"/>
        <dbReference type="Rhea" id="RHEA-COMP:11965"/>
        <dbReference type="ChEBI" id="CHEBI:15377"/>
        <dbReference type="ChEBI" id="CHEBI:15378"/>
        <dbReference type="ChEBI" id="CHEBI:15379"/>
        <dbReference type="ChEBI" id="CHEBI:30879"/>
        <dbReference type="ChEBI" id="CHEBI:57618"/>
        <dbReference type="ChEBI" id="CHEBI:58210"/>
        <dbReference type="ChEBI" id="CHEBI:142491"/>
        <dbReference type="EC" id="1.14.14.1"/>
    </reaction>
    <physiologicalReaction direction="right-to-left" evidence="22 26 30">
        <dbReference type="Rhea" id="RHEA:17151"/>
    </physiologicalReaction>
</comment>
<comment type="catalytic activity">
    <molecule>Isoform CYP4F3A</molecule>
    <reaction evidence="3 5 11 13">
        <text>leukotriene B4 + reduced [NADPH--hemoprotein reductase] + O2 = 20-hydroxy-leukotriene B4 + oxidized [NADPH--hemoprotein reductase] + H2O + H(+)</text>
        <dbReference type="Rhea" id="RHEA:22176"/>
        <dbReference type="Rhea" id="RHEA-COMP:11964"/>
        <dbReference type="Rhea" id="RHEA-COMP:11965"/>
        <dbReference type="ChEBI" id="CHEBI:15377"/>
        <dbReference type="ChEBI" id="CHEBI:15378"/>
        <dbReference type="ChEBI" id="CHEBI:15379"/>
        <dbReference type="ChEBI" id="CHEBI:57460"/>
        <dbReference type="ChEBI" id="CHEBI:57461"/>
        <dbReference type="ChEBI" id="CHEBI:57618"/>
        <dbReference type="ChEBI" id="CHEBI:58210"/>
        <dbReference type="EC" id="1.14.14.94"/>
    </reaction>
    <physiologicalReaction direction="left-to-right" evidence="22 24 30 31">
        <dbReference type="Rhea" id="RHEA:22177"/>
    </physiologicalReaction>
</comment>
<comment type="catalytic activity">
    <molecule>Isoform CYP4F3A</molecule>
    <reaction evidence="13">
        <text>20-hydroxy-leukotriene B4 + reduced [NADPH--hemoprotein reductase] + O2 = 20-oxo-leukotriene B4 + oxidized [NADPH--hemoprotein reductase] + 2 H2O + H(+)</text>
        <dbReference type="Rhea" id="RHEA:48668"/>
        <dbReference type="Rhea" id="RHEA-COMP:11964"/>
        <dbReference type="Rhea" id="RHEA-COMP:11965"/>
        <dbReference type="ChEBI" id="CHEBI:15377"/>
        <dbReference type="ChEBI" id="CHEBI:15378"/>
        <dbReference type="ChEBI" id="CHEBI:15379"/>
        <dbReference type="ChEBI" id="CHEBI:57460"/>
        <dbReference type="ChEBI" id="CHEBI:57618"/>
        <dbReference type="ChEBI" id="CHEBI:58210"/>
        <dbReference type="ChEBI" id="CHEBI:90720"/>
    </reaction>
    <physiologicalReaction direction="left-to-right" evidence="31">
        <dbReference type="Rhea" id="RHEA:48669"/>
    </physiologicalReaction>
</comment>
<comment type="catalytic activity">
    <molecule>Isoform CYP4F3A</molecule>
    <reaction evidence="13">
        <text>20-oxo-leukotriene B4 + reduced [NADPH--hemoprotein reductase] + O2 = 20-carboxy-leukotriene B4 + oxidized [NADPH--hemoprotein reductase] + H2O + 2 H(+)</text>
        <dbReference type="Rhea" id="RHEA:48672"/>
        <dbReference type="Rhea" id="RHEA-COMP:11964"/>
        <dbReference type="Rhea" id="RHEA-COMP:11965"/>
        <dbReference type="ChEBI" id="CHEBI:15377"/>
        <dbReference type="ChEBI" id="CHEBI:15378"/>
        <dbReference type="ChEBI" id="CHEBI:15379"/>
        <dbReference type="ChEBI" id="CHEBI:57618"/>
        <dbReference type="ChEBI" id="CHEBI:58210"/>
        <dbReference type="ChEBI" id="CHEBI:90720"/>
        <dbReference type="ChEBI" id="CHEBI:90722"/>
    </reaction>
    <physiologicalReaction direction="left-to-right" evidence="31">
        <dbReference type="Rhea" id="RHEA:48673"/>
    </physiologicalReaction>
</comment>
<comment type="catalytic activity">
    <molecule>Isoform CYP4F3A</molecule>
    <reaction evidence="10">
        <text>(5Z,8Z,11Z)-eicosatrienoate + reduced [NADPH--hemoprotein reductase] + O2 = 20-hydroxy-(5Z,8Z,11Z)-eicosatrienoate + oxidized [NADPH--hemoprotein reductase] + H2O + H(+)</text>
        <dbReference type="Rhea" id="RHEA:50164"/>
        <dbReference type="Rhea" id="RHEA-COMP:11964"/>
        <dbReference type="Rhea" id="RHEA-COMP:11965"/>
        <dbReference type="ChEBI" id="CHEBI:15377"/>
        <dbReference type="ChEBI" id="CHEBI:15378"/>
        <dbReference type="ChEBI" id="CHEBI:15379"/>
        <dbReference type="ChEBI" id="CHEBI:57618"/>
        <dbReference type="ChEBI" id="CHEBI:58210"/>
        <dbReference type="ChEBI" id="CHEBI:78043"/>
        <dbReference type="ChEBI" id="CHEBI:132026"/>
    </reaction>
    <physiologicalReaction direction="left-to-right" evidence="29">
        <dbReference type="Rhea" id="RHEA:50165"/>
    </physiologicalReaction>
</comment>
<comment type="catalytic activity">
    <molecule>Isoform CYP4F3A</molecule>
    <reaction evidence="3 5 10">
        <text>(5Z,8Z,11Z,14Z)-eicosatetraenoate + reduced [NADPH--hemoprotein reductase] + O2 = 20-hydroxy-(5Z,8Z,11Z,14Z)-eicosatetraenoate + oxidized [NADPH--hemoprotein reductase] + H2O + H(+)</text>
        <dbReference type="Rhea" id="RHEA:39755"/>
        <dbReference type="Rhea" id="RHEA-COMP:11964"/>
        <dbReference type="Rhea" id="RHEA-COMP:11965"/>
        <dbReference type="ChEBI" id="CHEBI:15377"/>
        <dbReference type="ChEBI" id="CHEBI:15378"/>
        <dbReference type="ChEBI" id="CHEBI:15379"/>
        <dbReference type="ChEBI" id="CHEBI:32395"/>
        <dbReference type="ChEBI" id="CHEBI:57618"/>
        <dbReference type="ChEBI" id="CHEBI:58210"/>
        <dbReference type="ChEBI" id="CHEBI:76624"/>
    </reaction>
    <physiologicalReaction direction="left-to-right" evidence="22 24 29">
        <dbReference type="Rhea" id="RHEA:39756"/>
    </physiologicalReaction>
</comment>
<comment type="catalytic activity">
    <molecule>Isoform CYP4F3A</molecule>
    <reaction evidence="10">
        <text>(5Z,8Z,11Z,14Z,17Z)-eicosapentaenoate + reduced [NADPH--hemoprotein reductase] + O2 = 19-hydroxy-(5Z,8Z,11Z,14Z,17Z)-eicosapentaenoate + oxidized [NADPH--hemoprotein reductase] + H2O + H(+)</text>
        <dbReference type="Rhea" id="RHEA:39787"/>
        <dbReference type="Rhea" id="RHEA-COMP:11964"/>
        <dbReference type="Rhea" id="RHEA-COMP:11965"/>
        <dbReference type="ChEBI" id="CHEBI:15377"/>
        <dbReference type="ChEBI" id="CHEBI:15378"/>
        <dbReference type="ChEBI" id="CHEBI:15379"/>
        <dbReference type="ChEBI" id="CHEBI:57618"/>
        <dbReference type="ChEBI" id="CHEBI:58210"/>
        <dbReference type="ChEBI" id="CHEBI:58562"/>
        <dbReference type="ChEBI" id="CHEBI:76636"/>
    </reaction>
    <physiologicalReaction direction="left-to-right" evidence="29">
        <dbReference type="Rhea" id="RHEA:39788"/>
    </physiologicalReaction>
</comment>
<comment type="catalytic activity">
    <molecule>Isoform CYP4F3A</molecule>
    <reaction evidence="10">
        <text>(5Z,8Z,11Z,14Z,17Z)-eicosapentaenoate + reduced [NADPH--hemoprotein reductase] + O2 = 20-hydroxy-(5Z,8Z,11Z,14Z,17Z)-eicosapentaenoate + oxidized [NADPH--hemoprotein reductase] + H2O + H(+)</text>
        <dbReference type="Rhea" id="RHEA:39791"/>
        <dbReference type="Rhea" id="RHEA-COMP:11964"/>
        <dbReference type="Rhea" id="RHEA-COMP:11965"/>
        <dbReference type="ChEBI" id="CHEBI:15377"/>
        <dbReference type="ChEBI" id="CHEBI:15378"/>
        <dbReference type="ChEBI" id="CHEBI:15379"/>
        <dbReference type="ChEBI" id="CHEBI:57618"/>
        <dbReference type="ChEBI" id="CHEBI:58210"/>
        <dbReference type="ChEBI" id="CHEBI:58562"/>
        <dbReference type="ChEBI" id="CHEBI:76639"/>
    </reaction>
    <physiologicalReaction direction="left-to-right" evidence="29">
        <dbReference type="Rhea" id="RHEA:39792"/>
    </physiologicalReaction>
</comment>
<comment type="catalytic activity">
    <molecule>Isoform CYP4F3A</molecule>
    <reaction evidence="10">
        <text>(4Z,7Z,10Z,13Z,16Z,19Z)-docosahexaenoate + reduced [NADPH--hemoprotein reductase] + O2 = 21-hydroxy-(4Z,7Z,10Z,13Z,16Z,19Z)-docosahexaenoate + oxidized [NADPH--hemoprotein reductase] + H2O + H(+)</text>
        <dbReference type="Rhea" id="RHEA:50088"/>
        <dbReference type="Rhea" id="RHEA-COMP:11964"/>
        <dbReference type="Rhea" id="RHEA-COMP:11965"/>
        <dbReference type="ChEBI" id="CHEBI:15377"/>
        <dbReference type="ChEBI" id="CHEBI:15378"/>
        <dbReference type="ChEBI" id="CHEBI:15379"/>
        <dbReference type="ChEBI" id="CHEBI:57618"/>
        <dbReference type="ChEBI" id="CHEBI:58210"/>
        <dbReference type="ChEBI" id="CHEBI:77016"/>
        <dbReference type="ChEBI" id="CHEBI:132025"/>
    </reaction>
    <physiologicalReaction direction="left-to-right" evidence="29">
        <dbReference type="Rhea" id="RHEA:50089"/>
    </physiologicalReaction>
</comment>
<comment type="catalytic activity">
    <molecule>Isoform CYP4F3A</molecule>
    <reaction evidence="10">
        <text>(4Z,7Z,10Z,13Z,16Z,19Z)-docosahexaenoate + reduced [NADPH--hemoprotein reductase] + O2 = 22-hydroxy-(4Z,7Z,10Z,13Z,16Z,19Z)-docosahexaenoate + oxidized [NADPH--hemoprotein reductase] + H2O + H(+)</text>
        <dbReference type="Rhea" id="RHEA:40155"/>
        <dbReference type="Rhea" id="RHEA-COMP:11964"/>
        <dbReference type="Rhea" id="RHEA-COMP:11965"/>
        <dbReference type="ChEBI" id="CHEBI:15377"/>
        <dbReference type="ChEBI" id="CHEBI:15378"/>
        <dbReference type="ChEBI" id="CHEBI:15379"/>
        <dbReference type="ChEBI" id="CHEBI:57618"/>
        <dbReference type="ChEBI" id="CHEBI:58210"/>
        <dbReference type="ChEBI" id="CHEBI:77015"/>
        <dbReference type="ChEBI" id="CHEBI:77016"/>
        <dbReference type="EC" id="1.14.14.79"/>
    </reaction>
    <physiologicalReaction direction="left-to-right" evidence="29">
        <dbReference type="Rhea" id="RHEA:40156"/>
    </physiologicalReaction>
</comment>
<comment type="catalytic activity">
    <molecule>Isoform CYP4F3A</molecule>
    <reaction evidence="4">
        <text>8,9-epoxy-(5Z,11Z,14Z)-eicosatrienoate + reduced [NADPH--hemoprotein reductase] + O2 = 20-hydroxy-8,9-epoxy-(5Z,11Z,14Z)-eicosatrienoate + oxidized [NADPH--hemoprotein reductase] + H2O + H(+)</text>
        <dbReference type="Rhea" id="RHEA:53572"/>
        <dbReference type="Rhea" id="RHEA-COMP:11964"/>
        <dbReference type="Rhea" id="RHEA-COMP:11965"/>
        <dbReference type="ChEBI" id="CHEBI:15377"/>
        <dbReference type="ChEBI" id="CHEBI:15378"/>
        <dbReference type="ChEBI" id="CHEBI:15379"/>
        <dbReference type="ChEBI" id="CHEBI:57618"/>
        <dbReference type="ChEBI" id="CHEBI:58210"/>
        <dbReference type="ChEBI" id="CHEBI:84025"/>
        <dbReference type="ChEBI" id="CHEBI:137474"/>
    </reaction>
    <physiologicalReaction direction="left-to-right" evidence="23">
        <dbReference type="Rhea" id="RHEA:53573"/>
    </physiologicalReaction>
</comment>
<comment type="catalytic activity">
    <molecule>Isoform CYP4F3A</molecule>
    <reaction evidence="4">
        <text>11,12-epoxy-(5Z,8Z,14Z)-eicosatrienoate + reduced [NADPH--hemoprotein reductase] + O2 = 20-hydroxy-11,12-epoxy-(5Z,8Z,14Z)-eicosatrienoate + oxidized [NADPH--hemoprotein reductase] + H2O + H(+)</text>
        <dbReference type="Rhea" id="RHEA:53576"/>
        <dbReference type="Rhea" id="RHEA-COMP:11964"/>
        <dbReference type="Rhea" id="RHEA-COMP:11965"/>
        <dbReference type="ChEBI" id="CHEBI:15377"/>
        <dbReference type="ChEBI" id="CHEBI:15378"/>
        <dbReference type="ChEBI" id="CHEBI:15379"/>
        <dbReference type="ChEBI" id="CHEBI:57618"/>
        <dbReference type="ChEBI" id="CHEBI:58210"/>
        <dbReference type="ChEBI" id="CHEBI:76625"/>
        <dbReference type="ChEBI" id="CHEBI:137475"/>
    </reaction>
    <physiologicalReaction direction="left-to-right" evidence="23">
        <dbReference type="Rhea" id="RHEA:53577"/>
    </physiologicalReaction>
</comment>
<comment type="catalytic activity">
    <molecule>Isoform CYP4F3A</molecule>
    <reaction evidence="4">
        <text>14,15-epoxy-(5Z,8Z,11Z)-eicosatrienoate + reduced [NADPH--hemoprotein reductase] + O2 = 20-hydroxy-14,15-epoxy-(5Z,8Z,11Z)-eicosatrienoate + oxidized [NADPH--hemoprotein reductase] + H2O + H(+)</text>
        <dbReference type="Rhea" id="RHEA:53580"/>
        <dbReference type="Rhea" id="RHEA-COMP:11964"/>
        <dbReference type="Rhea" id="RHEA-COMP:11965"/>
        <dbReference type="ChEBI" id="CHEBI:15377"/>
        <dbReference type="ChEBI" id="CHEBI:15378"/>
        <dbReference type="ChEBI" id="CHEBI:15379"/>
        <dbReference type="ChEBI" id="CHEBI:57618"/>
        <dbReference type="ChEBI" id="CHEBI:58210"/>
        <dbReference type="ChEBI" id="CHEBI:84024"/>
        <dbReference type="ChEBI" id="CHEBI:137476"/>
    </reaction>
    <physiologicalReaction direction="left-to-right" evidence="23">
        <dbReference type="Rhea" id="RHEA:53581"/>
    </physiologicalReaction>
</comment>
<comment type="catalytic activity">
    <molecule>Isoform CYP4F3A</molecule>
    <reaction evidence="4">
        <text>12,13-epoxy-(9Z)-octadecenoate + reduced [NADPH--hemoprotein reductase] + O2 = 18-hydroxy-12,13-epoxy-(9Z)-octadecenoate + oxidized [NADPH--hemoprotein reductase] + H2O + H(+)</text>
        <dbReference type="Rhea" id="RHEA:53568"/>
        <dbReference type="Rhea" id="RHEA-COMP:11964"/>
        <dbReference type="Rhea" id="RHEA-COMP:11965"/>
        <dbReference type="ChEBI" id="CHEBI:15377"/>
        <dbReference type="ChEBI" id="CHEBI:15378"/>
        <dbReference type="ChEBI" id="CHEBI:15379"/>
        <dbReference type="ChEBI" id="CHEBI:57618"/>
        <dbReference type="ChEBI" id="CHEBI:58210"/>
        <dbReference type="ChEBI" id="CHEBI:84026"/>
        <dbReference type="ChEBI" id="CHEBI:137469"/>
    </reaction>
    <physiologicalReaction direction="left-to-right" evidence="23">
        <dbReference type="Rhea" id="RHEA:53569"/>
    </physiologicalReaction>
</comment>
<comment type="catalytic activity">
    <molecule>Isoform CYP4F3A</molecule>
    <reaction evidence="4">
        <text>9,10-epoxy-(12Z)-octadecenoate + reduced [NADPH--hemoprotein reductase] + O2 = 18-hydroxy-9,10-epoxy-(12Z)-octadecenoate + oxidized [NADPH--hemoprotein reductase] + H2O + H(+)</text>
        <dbReference type="Rhea" id="RHEA:53564"/>
        <dbReference type="Rhea" id="RHEA-COMP:11964"/>
        <dbReference type="Rhea" id="RHEA-COMP:11965"/>
        <dbReference type="ChEBI" id="CHEBI:15377"/>
        <dbReference type="ChEBI" id="CHEBI:15378"/>
        <dbReference type="ChEBI" id="CHEBI:15379"/>
        <dbReference type="ChEBI" id="CHEBI:57618"/>
        <dbReference type="ChEBI" id="CHEBI:58210"/>
        <dbReference type="ChEBI" id="CHEBI:84023"/>
        <dbReference type="ChEBI" id="CHEBI:137467"/>
    </reaction>
    <physiologicalReaction direction="left-to-right" evidence="23">
        <dbReference type="Rhea" id="RHEA:53565"/>
    </physiologicalReaction>
</comment>
<comment type="catalytic activity">
    <molecule>Isoform CYP4F3A</molecule>
    <reaction evidence="4">
        <text>9,10-epoxyoctadecanoate + reduced [NADPH--hemoprotein reductase] + O2 = 18-hydroxy-9,10-epoxy-octadecanoate + oxidized [NADPH--hemoprotein reductase] + H2O + H(+)</text>
        <dbReference type="Rhea" id="RHEA:53560"/>
        <dbReference type="Rhea" id="RHEA-COMP:11964"/>
        <dbReference type="Rhea" id="RHEA-COMP:11965"/>
        <dbReference type="ChEBI" id="CHEBI:15377"/>
        <dbReference type="ChEBI" id="CHEBI:15378"/>
        <dbReference type="ChEBI" id="CHEBI:15379"/>
        <dbReference type="ChEBI" id="CHEBI:57618"/>
        <dbReference type="ChEBI" id="CHEBI:58210"/>
        <dbReference type="ChEBI" id="CHEBI:85195"/>
        <dbReference type="ChEBI" id="CHEBI:137457"/>
    </reaction>
    <physiologicalReaction direction="left-to-right" evidence="23">
        <dbReference type="Rhea" id="RHEA:53561"/>
    </physiologicalReaction>
</comment>
<comment type="catalytic activity">
    <molecule>Isoform CYP4F3A</molecule>
    <reaction evidence="13">
        <text>(12R)-hydroxy-(9Z)-octadecenoate + reduced [NADPH--hemoprotein reductase] + O2 = (12R),18-dihydroxy-(9Z)-octadecenoate + oxidized [NADPH--hemoprotein reductase] + H2O + H(+)</text>
        <dbReference type="Rhea" id="RHEA:49384"/>
        <dbReference type="Rhea" id="RHEA-COMP:11964"/>
        <dbReference type="Rhea" id="RHEA-COMP:11965"/>
        <dbReference type="ChEBI" id="CHEBI:15377"/>
        <dbReference type="ChEBI" id="CHEBI:15378"/>
        <dbReference type="ChEBI" id="CHEBI:15379"/>
        <dbReference type="ChEBI" id="CHEBI:57618"/>
        <dbReference type="ChEBI" id="CHEBI:58210"/>
        <dbReference type="ChEBI" id="CHEBI:91295"/>
        <dbReference type="ChEBI" id="CHEBI:91300"/>
    </reaction>
    <physiologicalReaction direction="left-to-right" evidence="31">
        <dbReference type="Rhea" id="RHEA:49385"/>
    </physiologicalReaction>
</comment>
<comment type="catalytic activity">
    <molecule>Isoform CYP4F3A</molecule>
    <reaction evidence="13">
        <text>12-hydroxyoctadecanoate + reduced [NADPH--hemoprotein reductase] + O2 = 12,18-dihydroxyoctadecanoate + oxidized [NADPH--hemoprotein reductase] + H2O + H(+)</text>
        <dbReference type="Rhea" id="RHEA:49376"/>
        <dbReference type="Rhea" id="RHEA-COMP:11964"/>
        <dbReference type="Rhea" id="RHEA-COMP:11965"/>
        <dbReference type="ChEBI" id="CHEBI:15377"/>
        <dbReference type="ChEBI" id="CHEBI:15378"/>
        <dbReference type="ChEBI" id="CHEBI:15379"/>
        <dbReference type="ChEBI" id="CHEBI:57618"/>
        <dbReference type="ChEBI" id="CHEBI:58210"/>
        <dbReference type="ChEBI" id="CHEBI:84201"/>
        <dbReference type="ChEBI" id="CHEBI:91294"/>
    </reaction>
    <physiologicalReaction direction="left-to-right" evidence="31">
        <dbReference type="Rhea" id="RHEA:49377"/>
    </physiologicalReaction>
</comment>
<comment type="catalytic activity">
    <molecule>Isoform CYP4F3A</molecule>
    <reaction evidence="5 13">
        <text>5-hydroxy-(6E,8Z,11Z,14Z)-eicosatetraenoate + reduced [NADPH--hemoprotein reductase] + O2 = 5,20-dihydroxy-(6E,8Z,11Z,14Z)-eicosatetraenoate + oxidized [NADPH--hemoprotein reductase] + H2O + H(+)</text>
        <dbReference type="Rhea" id="RHEA:48656"/>
        <dbReference type="Rhea" id="RHEA-COMP:11964"/>
        <dbReference type="Rhea" id="RHEA-COMP:11965"/>
        <dbReference type="ChEBI" id="CHEBI:15377"/>
        <dbReference type="ChEBI" id="CHEBI:15378"/>
        <dbReference type="ChEBI" id="CHEBI:15379"/>
        <dbReference type="ChEBI" id="CHEBI:57618"/>
        <dbReference type="ChEBI" id="CHEBI:58210"/>
        <dbReference type="ChEBI" id="CHEBI:65341"/>
        <dbReference type="ChEBI" id="CHEBI:90715"/>
    </reaction>
    <physiologicalReaction direction="left-to-right" evidence="24 31">
        <dbReference type="Rhea" id="RHEA:48657"/>
    </physiologicalReaction>
</comment>
<comment type="catalytic activity">
    <molecule>Isoform CYP4F3A</molecule>
    <reaction evidence="5 13">
        <text>8-hydroxy-(5Z,9E,11Z,14Z)-eicosatetraenoate + reduced [NADPH--hemoprotein reductase] + O2 = 8,20-dihydroxy-(5Z,9E,11Z,14Z)-eicosatetraenoate + oxidized [NADPH--hemoprotein reductase] + H2O + H(+)</text>
        <dbReference type="Rhea" id="RHEA:48660"/>
        <dbReference type="Rhea" id="RHEA-COMP:11964"/>
        <dbReference type="Rhea" id="RHEA-COMP:11965"/>
        <dbReference type="ChEBI" id="CHEBI:15377"/>
        <dbReference type="ChEBI" id="CHEBI:15378"/>
        <dbReference type="ChEBI" id="CHEBI:15379"/>
        <dbReference type="ChEBI" id="CHEBI:57618"/>
        <dbReference type="ChEBI" id="CHEBI:58210"/>
        <dbReference type="ChEBI" id="CHEBI:90716"/>
        <dbReference type="ChEBI" id="CHEBI:90717"/>
    </reaction>
    <physiologicalReaction direction="left-to-right" evidence="24 31">
        <dbReference type="Rhea" id="RHEA:48661"/>
    </physiologicalReaction>
</comment>
<comment type="catalytic activity">
    <molecule>Isoform CYP4F3A</molecule>
    <reaction evidence="5">
        <text>12-hydroxy-(5Z,8Z,10E,14Z)-eicosatetraenoate + reduced [NADPH--hemoprotein reductase] + O2 = 12,20-dihydroxy-(5Z,8Z,10E,14Z)-eicosatetraenoate + oxidized [NADPH--hemoprotein reductase] + H2O + H(+)</text>
        <dbReference type="Rhea" id="RHEA:48664"/>
        <dbReference type="Rhea" id="RHEA-COMP:11964"/>
        <dbReference type="Rhea" id="RHEA-COMP:11965"/>
        <dbReference type="ChEBI" id="CHEBI:15377"/>
        <dbReference type="ChEBI" id="CHEBI:15378"/>
        <dbReference type="ChEBI" id="CHEBI:15379"/>
        <dbReference type="ChEBI" id="CHEBI:57618"/>
        <dbReference type="ChEBI" id="CHEBI:58210"/>
        <dbReference type="ChEBI" id="CHEBI:90718"/>
        <dbReference type="ChEBI" id="CHEBI:90719"/>
    </reaction>
    <physiologicalReaction direction="left-to-right" evidence="31">
        <dbReference type="Rhea" id="RHEA:48665"/>
    </physiologicalReaction>
</comment>
<comment type="catalytic activity">
    <molecule>Isoform CYP4F3A</molecule>
    <reaction evidence="13">
        <text>5-hydroxy-(6E,8Z,11Z,14Z,17Z)-eicosapentaenoate + reduced [NADPH--hemoprotein reductase] + O2 = 5,20-dihydroxy-(6E,8Z,11Z,14Z,17Z)-eicosapentaenoate + oxidized [NADPH--hemoprotein reductase] + H2O + H(+)</text>
        <dbReference type="Rhea" id="RHEA:49380"/>
        <dbReference type="Rhea" id="RHEA-COMP:11964"/>
        <dbReference type="Rhea" id="RHEA-COMP:11965"/>
        <dbReference type="ChEBI" id="CHEBI:15377"/>
        <dbReference type="ChEBI" id="CHEBI:15378"/>
        <dbReference type="ChEBI" id="CHEBI:15379"/>
        <dbReference type="ChEBI" id="CHEBI:57618"/>
        <dbReference type="ChEBI" id="CHEBI:58210"/>
        <dbReference type="ChEBI" id="CHEBI:90737"/>
        <dbReference type="ChEBI" id="CHEBI:91301"/>
    </reaction>
    <physiologicalReaction direction="left-to-right" evidence="31">
        <dbReference type="Rhea" id="RHEA:49381"/>
    </physiologicalReaction>
</comment>
<comment type="catalytic activity">
    <molecule>Isoform CYP4F3A</molecule>
    <reaction evidence="5">
        <text>lipoxin A4 + reduced [NADPH--hemoprotein reductase] + O2 = 20-hydroxy-lipoxin A4 + oxidized [NADPH--hemoprotein reductase] + H2O + H(+)</text>
        <dbReference type="Rhea" id="RHEA:48648"/>
        <dbReference type="Rhea" id="RHEA-COMP:11964"/>
        <dbReference type="Rhea" id="RHEA-COMP:11965"/>
        <dbReference type="ChEBI" id="CHEBI:15377"/>
        <dbReference type="ChEBI" id="CHEBI:15378"/>
        <dbReference type="ChEBI" id="CHEBI:15379"/>
        <dbReference type="ChEBI" id="CHEBI:57618"/>
        <dbReference type="ChEBI" id="CHEBI:58210"/>
        <dbReference type="ChEBI" id="CHEBI:67026"/>
        <dbReference type="ChEBI" id="CHEBI:90707"/>
    </reaction>
    <physiologicalReaction direction="left-to-right" evidence="24">
        <dbReference type="Rhea" id="RHEA:48649"/>
    </physiologicalReaction>
</comment>
<comment type="catalytic activity">
    <molecule>Isoform CYP4F3A</molecule>
    <reaction evidence="5 13">
        <text>lipoxin B4 + reduced [NADPH--hemoprotein reductase] + O2 = 20-hydroxy-lipoxin B4 + oxidized [NADPH--hemoprotein reductase] + H2O + H(+)</text>
        <dbReference type="Rhea" id="RHEA:48652"/>
        <dbReference type="Rhea" id="RHEA-COMP:11964"/>
        <dbReference type="Rhea" id="RHEA-COMP:11965"/>
        <dbReference type="ChEBI" id="CHEBI:15377"/>
        <dbReference type="ChEBI" id="CHEBI:15378"/>
        <dbReference type="ChEBI" id="CHEBI:15379"/>
        <dbReference type="ChEBI" id="CHEBI:57618"/>
        <dbReference type="ChEBI" id="CHEBI:58210"/>
        <dbReference type="ChEBI" id="CHEBI:67031"/>
        <dbReference type="ChEBI" id="CHEBI:90711"/>
    </reaction>
    <physiologicalReaction direction="left-to-right" evidence="24 31">
        <dbReference type="Rhea" id="RHEA:48653"/>
    </physiologicalReaction>
</comment>
<comment type="catalytic activity">
    <molecule>Isoform CYP4F3A</molecule>
    <reaction evidence="9">
        <text>22-hydroxydocosanoate + reduced [NADPH--hemoprotein reductase] + O2 = 22-oxodocosanoate + oxidized [NADPH--hemoprotein reductase] + 2 H2O + H(+)</text>
        <dbReference type="Rhea" id="RHEA:39055"/>
        <dbReference type="Rhea" id="RHEA-COMP:11964"/>
        <dbReference type="Rhea" id="RHEA-COMP:11965"/>
        <dbReference type="ChEBI" id="CHEBI:15377"/>
        <dbReference type="ChEBI" id="CHEBI:15378"/>
        <dbReference type="ChEBI" id="CHEBI:15379"/>
        <dbReference type="ChEBI" id="CHEBI:57618"/>
        <dbReference type="ChEBI" id="CHEBI:58210"/>
        <dbReference type="ChEBI" id="CHEBI:76298"/>
        <dbReference type="ChEBI" id="CHEBI:76304"/>
    </reaction>
    <physiologicalReaction direction="left-to-right" evidence="28">
        <dbReference type="Rhea" id="RHEA:39056"/>
    </physiologicalReaction>
</comment>
<comment type="catalytic activity">
    <molecule>Isoform CYP4F3A</molecule>
    <reaction evidence="9">
        <text>22-oxodocosanoate + reduced [NADPH--hemoprotein reductase] + O2 = docosanedioate + oxidized [NADPH--hemoprotein reductase] + H2O + 2 H(+)</text>
        <dbReference type="Rhea" id="RHEA:39043"/>
        <dbReference type="Rhea" id="RHEA-COMP:11964"/>
        <dbReference type="Rhea" id="RHEA-COMP:11965"/>
        <dbReference type="ChEBI" id="CHEBI:15377"/>
        <dbReference type="ChEBI" id="CHEBI:15378"/>
        <dbReference type="ChEBI" id="CHEBI:15379"/>
        <dbReference type="ChEBI" id="CHEBI:57618"/>
        <dbReference type="ChEBI" id="CHEBI:58210"/>
        <dbReference type="ChEBI" id="CHEBI:76298"/>
        <dbReference type="ChEBI" id="CHEBI:76299"/>
    </reaction>
    <physiologicalReaction direction="left-to-right" evidence="28">
        <dbReference type="Rhea" id="RHEA:39044"/>
    </physiologicalReaction>
</comment>
<comment type="catalytic activity">
    <molecule>Isoform CYP4F3B</molecule>
    <reaction evidence="10">
        <text>(5Z,8Z,11Z)-eicosatrienoate + reduced [NADPH--hemoprotein reductase] + O2 = 20-hydroxy-(5Z,8Z,11Z)-eicosatrienoate + oxidized [NADPH--hemoprotein reductase] + H2O + H(+)</text>
        <dbReference type="Rhea" id="RHEA:50164"/>
        <dbReference type="Rhea" id="RHEA-COMP:11964"/>
        <dbReference type="Rhea" id="RHEA-COMP:11965"/>
        <dbReference type="ChEBI" id="CHEBI:15377"/>
        <dbReference type="ChEBI" id="CHEBI:15378"/>
        <dbReference type="ChEBI" id="CHEBI:15379"/>
        <dbReference type="ChEBI" id="CHEBI:57618"/>
        <dbReference type="ChEBI" id="CHEBI:58210"/>
        <dbReference type="ChEBI" id="CHEBI:78043"/>
        <dbReference type="ChEBI" id="CHEBI:132026"/>
    </reaction>
    <physiologicalReaction direction="left-to-right" evidence="29">
        <dbReference type="Rhea" id="RHEA:50165"/>
    </physiologicalReaction>
</comment>
<comment type="catalytic activity">
    <molecule>Isoform CYP4F3B</molecule>
    <reaction evidence="3 7 10">
        <text>(5Z,8Z,11Z,14Z)-eicosatetraenoate + reduced [NADPH--hemoprotein reductase] + O2 = 20-hydroxy-(5Z,8Z,11Z,14Z)-eicosatetraenoate + oxidized [NADPH--hemoprotein reductase] + H2O + H(+)</text>
        <dbReference type="Rhea" id="RHEA:39755"/>
        <dbReference type="Rhea" id="RHEA-COMP:11964"/>
        <dbReference type="Rhea" id="RHEA-COMP:11965"/>
        <dbReference type="ChEBI" id="CHEBI:15377"/>
        <dbReference type="ChEBI" id="CHEBI:15378"/>
        <dbReference type="ChEBI" id="CHEBI:15379"/>
        <dbReference type="ChEBI" id="CHEBI:32395"/>
        <dbReference type="ChEBI" id="CHEBI:57618"/>
        <dbReference type="ChEBI" id="CHEBI:58210"/>
        <dbReference type="ChEBI" id="CHEBI:76624"/>
    </reaction>
    <physiologicalReaction direction="left-to-right" evidence="22 26 29">
        <dbReference type="Rhea" id="RHEA:39756"/>
    </physiologicalReaction>
</comment>
<comment type="catalytic activity">
    <molecule>Isoform CYP4F3B</molecule>
    <reaction evidence="10">
        <text>(5Z,8Z,11Z,14Z,17Z)-eicosapentaenoate + reduced [NADPH--hemoprotein reductase] + O2 = 19-hydroxy-(5Z,8Z,11Z,14Z,17Z)-eicosapentaenoate + oxidized [NADPH--hemoprotein reductase] + H2O + H(+)</text>
        <dbReference type="Rhea" id="RHEA:39787"/>
        <dbReference type="Rhea" id="RHEA-COMP:11964"/>
        <dbReference type="Rhea" id="RHEA-COMP:11965"/>
        <dbReference type="ChEBI" id="CHEBI:15377"/>
        <dbReference type="ChEBI" id="CHEBI:15378"/>
        <dbReference type="ChEBI" id="CHEBI:15379"/>
        <dbReference type="ChEBI" id="CHEBI:57618"/>
        <dbReference type="ChEBI" id="CHEBI:58210"/>
        <dbReference type="ChEBI" id="CHEBI:58562"/>
        <dbReference type="ChEBI" id="CHEBI:76636"/>
    </reaction>
    <physiologicalReaction direction="left-to-right" evidence="29">
        <dbReference type="Rhea" id="RHEA:39788"/>
    </physiologicalReaction>
</comment>
<comment type="catalytic activity">
    <molecule>Isoform CYP4F3B</molecule>
    <reaction evidence="7 10">
        <text>(5Z,8Z,11Z,14Z,17Z)-eicosapentaenoate + reduced [NADPH--hemoprotein reductase] + O2 = 20-hydroxy-(5Z,8Z,11Z,14Z,17Z)-eicosapentaenoate + oxidized [NADPH--hemoprotein reductase] + H2O + H(+)</text>
        <dbReference type="Rhea" id="RHEA:39791"/>
        <dbReference type="Rhea" id="RHEA-COMP:11964"/>
        <dbReference type="Rhea" id="RHEA-COMP:11965"/>
        <dbReference type="ChEBI" id="CHEBI:15377"/>
        <dbReference type="ChEBI" id="CHEBI:15378"/>
        <dbReference type="ChEBI" id="CHEBI:15379"/>
        <dbReference type="ChEBI" id="CHEBI:57618"/>
        <dbReference type="ChEBI" id="CHEBI:58210"/>
        <dbReference type="ChEBI" id="CHEBI:58562"/>
        <dbReference type="ChEBI" id="CHEBI:76639"/>
    </reaction>
    <physiologicalReaction direction="left-to-right" evidence="26 29">
        <dbReference type="Rhea" id="RHEA:39792"/>
    </physiologicalReaction>
</comment>
<comment type="catalytic activity">
    <molecule>Isoform CYP4F3B</molecule>
    <reaction evidence="10">
        <text>(4Z,7Z,10Z,13Z,16Z,19Z)-docosahexaenoate + reduced [NADPH--hemoprotein reductase] + O2 = 21-hydroxy-(4Z,7Z,10Z,13Z,16Z,19Z)-docosahexaenoate + oxidized [NADPH--hemoprotein reductase] + H2O + H(+)</text>
        <dbReference type="Rhea" id="RHEA:50088"/>
        <dbReference type="Rhea" id="RHEA-COMP:11964"/>
        <dbReference type="Rhea" id="RHEA-COMP:11965"/>
        <dbReference type="ChEBI" id="CHEBI:15377"/>
        <dbReference type="ChEBI" id="CHEBI:15378"/>
        <dbReference type="ChEBI" id="CHEBI:15379"/>
        <dbReference type="ChEBI" id="CHEBI:57618"/>
        <dbReference type="ChEBI" id="CHEBI:58210"/>
        <dbReference type="ChEBI" id="CHEBI:77016"/>
        <dbReference type="ChEBI" id="CHEBI:132025"/>
    </reaction>
    <physiologicalReaction direction="left-to-right" evidence="29">
        <dbReference type="Rhea" id="RHEA:50089"/>
    </physiologicalReaction>
</comment>
<comment type="catalytic activity">
    <molecule>Isoform CYP4F3B</molecule>
    <reaction evidence="7 10">
        <text>(4Z,7Z,10Z,13Z,16Z,19Z)-docosahexaenoate + reduced [NADPH--hemoprotein reductase] + O2 = 22-hydroxy-(4Z,7Z,10Z,13Z,16Z,19Z)-docosahexaenoate + oxidized [NADPH--hemoprotein reductase] + H2O + H(+)</text>
        <dbReference type="Rhea" id="RHEA:40155"/>
        <dbReference type="Rhea" id="RHEA-COMP:11964"/>
        <dbReference type="Rhea" id="RHEA-COMP:11965"/>
        <dbReference type="ChEBI" id="CHEBI:15377"/>
        <dbReference type="ChEBI" id="CHEBI:15378"/>
        <dbReference type="ChEBI" id="CHEBI:15379"/>
        <dbReference type="ChEBI" id="CHEBI:57618"/>
        <dbReference type="ChEBI" id="CHEBI:58210"/>
        <dbReference type="ChEBI" id="CHEBI:77015"/>
        <dbReference type="ChEBI" id="CHEBI:77016"/>
        <dbReference type="EC" id="1.14.14.79"/>
    </reaction>
    <physiologicalReaction direction="left-to-right" evidence="26 29">
        <dbReference type="Rhea" id="RHEA:40156"/>
    </physiologicalReaction>
</comment>
<comment type="catalytic activity">
    <molecule>Isoform CYP4F3B</molecule>
    <reaction evidence="4">
        <text>8,9-epoxy-(5Z,11Z,14Z)-eicosatrienoate + reduced [NADPH--hemoprotein reductase] + O2 = 20-hydroxy-8,9-epoxy-(5Z,11Z,14Z)-eicosatrienoate + oxidized [NADPH--hemoprotein reductase] + H2O + H(+)</text>
        <dbReference type="Rhea" id="RHEA:53572"/>
        <dbReference type="Rhea" id="RHEA-COMP:11964"/>
        <dbReference type="Rhea" id="RHEA-COMP:11965"/>
        <dbReference type="ChEBI" id="CHEBI:15377"/>
        <dbReference type="ChEBI" id="CHEBI:15378"/>
        <dbReference type="ChEBI" id="CHEBI:15379"/>
        <dbReference type="ChEBI" id="CHEBI:57618"/>
        <dbReference type="ChEBI" id="CHEBI:58210"/>
        <dbReference type="ChEBI" id="CHEBI:84025"/>
        <dbReference type="ChEBI" id="CHEBI:137474"/>
    </reaction>
    <physiologicalReaction direction="left-to-right" evidence="23">
        <dbReference type="Rhea" id="RHEA:53573"/>
    </physiologicalReaction>
</comment>
<comment type="catalytic activity">
    <molecule>Isoform CYP4F3B</molecule>
    <reaction evidence="4">
        <text>14,15-epoxy-(5Z,8Z,11Z)-eicosatrienoate + reduced [NADPH--hemoprotein reductase] + O2 = 20-hydroxy-14,15-epoxy-(5Z,8Z,11Z)-eicosatrienoate + oxidized [NADPH--hemoprotein reductase] + H2O + H(+)</text>
        <dbReference type="Rhea" id="RHEA:53580"/>
        <dbReference type="Rhea" id="RHEA-COMP:11964"/>
        <dbReference type="Rhea" id="RHEA-COMP:11965"/>
        <dbReference type="ChEBI" id="CHEBI:15377"/>
        <dbReference type="ChEBI" id="CHEBI:15378"/>
        <dbReference type="ChEBI" id="CHEBI:15379"/>
        <dbReference type="ChEBI" id="CHEBI:57618"/>
        <dbReference type="ChEBI" id="CHEBI:58210"/>
        <dbReference type="ChEBI" id="CHEBI:84024"/>
        <dbReference type="ChEBI" id="CHEBI:137476"/>
    </reaction>
    <physiologicalReaction direction="left-to-right" evidence="23">
        <dbReference type="Rhea" id="RHEA:53581"/>
    </physiologicalReaction>
</comment>
<comment type="catalytic activity">
    <molecule>Isoform CYP4F3B</molecule>
    <reaction evidence="4">
        <text>12,13-epoxy-(9Z)-octadecenoate + reduced [NADPH--hemoprotein reductase] + O2 = 18-hydroxy-12,13-epoxy-(9Z)-octadecenoate + oxidized [NADPH--hemoprotein reductase] + H2O + H(+)</text>
        <dbReference type="Rhea" id="RHEA:53568"/>
        <dbReference type="Rhea" id="RHEA-COMP:11964"/>
        <dbReference type="Rhea" id="RHEA-COMP:11965"/>
        <dbReference type="ChEBI" id="CHEBI:15377"/>
        <dbReference type="ChEBI" id="CHEBI:15378"/>
        <dbReference type="ChEBI" id="CHEBI:15379"/>
        <dbReference type="ChEBI" id="CHEBI:57618"/>
        <dbReference type="ChEBI" id="CHEBI:58210"/>
        <dbReference type="ChEBI" id="CHEBI:84026"/>
        <dbReference type="ChEBI" id="CHEBI:137469"/>
    </reaction>
    <physiologicalReaction direction="left-to-right" evidence="23">
        <dbReference type="Rhea" id="RHEA:53569"/>
    </physiologicalReaction>
</comment>
<comment type="catalytic activity">
    <molecule>Isoform CYP4F3B</molecule>
    <reaction evidence="4">
        <text>9,10-epoxy-(12Z)-octadecenoate + reduced [NADPH--hemoprotein reductase] + O2 = 18-hydroxy-9,10-epoxy-(12Z)-octadecenoate + oxidized [NADPH--hemoprotein reductase] + H2O + H(+)</text>
        <dbReference type="Rhea" id="RHEA:53564"/>
        <dbReference type="Rhea" id="RHEA-COMP:11964"/>
        <dbReference type="Rhea" id="RHEA-COMP:11965"/>
        <dbReference type="ChEBI" id="CHEBI:15377"/>
        <dbReference type="ChEBI" id="CHEBI:15378"/>
        <dbReference type="ChEBI" id="CHEBI:15379"/>
        <dbReference type="ChEBI" id="CHEBI:57618"/>
        <dbReference type="ChEBI" id="CHEBI:58210"/>
        <dbReference type="ChEBI" id="CHEBI:84023"/>
        <dbReference type="ChEBI" id="CHEBI:137467"/>
    </reaction>
    <physiologicalReaction direction="left-to-right" evidence="23">
        <dbReference type="Rhea" id="RHEA:53565"/>
    </physiologicalReaction>
</comment>
<comment type="catalytic activity">
    <molecule>Isoform CYP4F3B</molecule>
    <reaction evidence="4">
        <text>9,10-epoxyoctadecanoate + reduced [NADPH--hemoprotein reductase] + O2 = 18-hydroxy-9,10-epoxy-octadecanoate + oxidized [NADPH--hemoprotein reductase] + H2O + H(+)</text>
        <dbReference type="Rhea" id="RHEA:53560"/>
        <dbReference type="Rhea" id="RHEA-COMP:11964"/>
        <dbReference type="Rhea" id="RHEA-COMP:11965"/>
        <dbReference type="ChEBI" id="CHEBI:15377"/>
        <dbReference type="ChEBI" id="CHEBI:15378"/>
        <dbReference type="ChEBI" id="CHEBI:15379"/>
        <dbReference type="ChEBI" id="CHEBI:57618"/>
        <dbReference type="ChEBI" id="CHEBI:58210"/>
        <dbReference type="ChEBI" id="CHEBI:85195"/>
        <dbReference type="ChEBI" id="CHEBI:137457"/>
    </reaction>
    <physiologicalReaction direction="left-to-right" evidence="23">
        <dbReference type="Rhea" id="RHEA:53561"/>
    </physiologicalReaction>
</comment>
<comment type="catalytic activity">
    <molecule>Isoform CYP4F3B</molecule>
    <reaction evidence="6">
        <text>docosanoate + reduced [NADPH--hemoprotein reductase] + O2 = 22-hydroxydocosanoate + oxidized [NADPH--hemoprotein reductase] + H2O + H(+)</text>
        <dbReference type="Rhea" id="RHEA:40079"/>
        <dbReference type="Rhea" id="RHEA-COMP:11964"/>
        <dbReference type="Rhea" id="RHEA-COMP:11965"/>
        <dbReference type="ChEBI" id="CHEBI:15377"/>
        <dbReference type="ChEBI" id="CHEBI:15378"/>
        <dbReference type="ChEBI" id="CHEBI:15379"/>
        <dbReference type="ChEBI" id="CHEBI:23858"/>
        <dbReference type="ChEBI" id="CHEBI:57618"/>
        <dbReference type="ChEBI" id="CHEBI:58210"/>
        <dbReference type="ChEBI" id="CHEBI:76304"/>
    </reaction>
    <physiologicalReaction direction="left-to-right" evidence="25">
        <dbReference type="Rhea" id="RHEA:40080"/>
    </physiologicalReaction>
</comment>
<comment type="catalytic activity">
    <molecule>Isoform CYP4F3B</molecule>
    <reaction evidence="9">
        <text>22-hydroxydocosanoate + reduced [NADPH--hemoprotein reductase] + O2 = 22-oxodocosanoate + oxidized [NADPH--hemoprotein reductase] + 2 H2O + H(+)</text>
        <dbReference type="Rhea" id="RHEA:39055"/>
        <dbReference type="Rhea" id="RHEA-COMP:11964"/>
        <dbReference type="Rhea" id="RHEA-COMP:11965"/>
        <dbReference type="ChEBI" id="CHEBI:15377"/>
        <dbReference type="ChEBI" id="CHEBI:15378"/>
        <dbReference type="ChEBI" id="CHEBI:15379"/>
        <dbReference type="ChEBI" id="CHEBI:57618"/>
        <dbReference type="ChEBI" id="CHEBI:58210"/>
        <dbReference type="ChEBI" id="CHEBI:76298"/>
        <dbReference type="ChEBI" id="CHEBI:76304"/>
    </reaction>
    <physiologicalReaction direction="left-to-right" evidence="28">
        <dbReference type="Rhea" id="RHEA:39056"/>
    </physiologicalReaction>
</comment>
<comment type="catalytic activity">
    <molecule>Isoform CYP4F3B</molecule>
    <reaction evidence="9">
        <text>22-oxodocosanoate + reduced [NADPH--hemoprotein reductase] + O2 = docosanedioate + oxidized [NADPH--hemoprotein reductase] + H2O + 2 H(+)</text>
        <dbReference type="Rhea" id="RHEA:39043"/>
        <dbReference type="Rhea" id="RHEA-COMP:11964"/>
        <dbReference type="Rhea" id="RHEA-COMP:11965"/>
        <dbReference type="ChEBI" id="CHEBI:15377"/>
        <dbReference type="ChEBI" id="CHEBI:15378"/>
        <dbReference type="ChEBI" id="CHEBI:15379"/>
        <dbReference type="ChEBI" id="CHEBI:57618"/>
        <dbReference type="ChEBI" id="CHEBI:58210"/>
        <dbReference type="ChEBI" id="CHEBI:76298"/>
        <dbReference type="ChEBI" id="CHEBI:76299"/>
    </reaction>
    <physiologicalReaction direction="left-to-right" evidence="28">
        <dbReference type="Rhea" id="RHEA:39044"/>
    </physiologicalReaction>
</comment>
<comment type="catalytic activity">
    <molecule>Isoform CYP4F3B</molecule>
    <reaction evidence="6">
        <text>tetracosanoate + reduced [NADPH--hemoprotein reductase] + O2 = 24-hydroxytetracosanoate + oxidized [NADPH--hemoprotein reductase] + H2O + H(+)</text>
        <dbReference type="Rhea" id="RHEA:39719"/>
        <dbReference type="Rhea" id="RHEA-COMP:11964"/>
        <dbReference type="Rhea" id="RHEA-COMP:11965"/>
        <dbReference type="ChEBI" id="CHEBI:15377"/>
        <dbReference type="ChEBI" id="CHEBI:15378"/>
        <dbReference type="ChEBI" id="CHEBI:15379"/>
        <dbReference type="ChEBI" id="CHEBI:31014"/>
        <dbReference type="ChEBI" id="CHEBI:57618"/>
        <dbReference type="ChEBI" id="CHEBI:58210"/>
        <dbReference type="ChEBI" id="CHEBI:76610"/>
    </reaction>
    <physiologicalReaction direction="left-to-right" evidence="25">
        <dbReference type="Rhea" id="RHEA:39720"/>
    </physiologicalReaction>
</comment>
<comment type="catalytic activity">
    <molecule>Isoform CYP4F3B</molecule>
    <reaction evidence="6">
        <text>hexacosanoate + reduced [NADPH--hemoprotein reductase] + O2 = 26-hydroxyhexacosanoate + oxidized [NADPH--hemoprotein reductase] + H2O + H(+)</text>
        <dbReference type="Rhea" id="RHEA:40083"/>
        <dbReference type="Rhea" id="RHEA-COMP:11964"/>
        <dbReference type="Rhea" id="RHEA-COMP:11965"/>
        <dbReference type="ChEBI" id="CHEBI:15377"/>
        <dbReference type="ChEBI" id="CHEBI:15378"/>
        <dbReference type="ChEBI" id="CHEBI:15379"/>
        <dbReference type="ChEBI" id="CHEBI:31013"/>
        <dbReference type="ChEBI" id="CHEBI:57618"/>
        <dbReference type="ChEBI" id="CHEBI:58210"/>
        <dbReference type="ChEBI" id="CHEBI:76305"/>
    </reaction>
    <physiologicalReaction direction="left-to-right" evidence="25">
        <dbReference type="Rhea" id="RHEA:40084"/>
    </physiologicalReaction>
</comment>
<comment type="catalytic activity">
    <molecule>Isoform CYP4F3B</molecule>
    <reaction evidence="6 9">
        <text>26-hydroxyhexacosanoate + reduced [NADPH--hemoprotein reductase] + O2 = 26-oxohexacosanoate + oxidized [NADPH--hemoprotein reductase] + 2 H2O + H(+)</text>
        <dbReference type="Rhea" id="RHEA:39059"/>
        <dbReference type="Rhea" id="RHEA-COMP:11964"/>
        <dbReference type="Rhea" id="RHEA-COMP:11965"/>
        <dbReference type="ChEBI" id="CHEBI:15377"/>
        <dbReference type="ChEBI" id="CHEBI:15378"/>
        <dbReference type="ChEBI" id="CHEBI:15379"/>
        <dbReference type="ChEBI" id="CHEBI:57618"/>
        <dbReference type="ChEBI" id="CHEBI:58210"/>
        <dbReference type="ChEBI" id="CHEBI:76305"/>
        <dbReference type="ChEBI" id="CHEBI:76311"/>
    </reaction>
    <physiologicalReaction direction="left-to-right" evidence="25 28">
        <dbReference type="Rhea" id="RHEA:39060"/>
    </physiologicalReaction>
</comment>
<comment type="catalytic activity">
    <molecule>Isoform CYP4F3B</molecule>
    <reaction evidence="6 9">
        <text>26-oxohexacosanoate + reduced [NADPH--hemoprotein reductase] + O2 = hexacosanedioate + oxidized [NADPH--hemoprotein reductase] + H2O + 2 H(+)</text>
        <dbReference type="Rhea" id="RHEA:39047"/>
        <dbReference type="Rhea" id="RHEA-COMP:11964"/>
        <dbReference type="Rhea" id="RHEA-COMP:11965"/>
        <dbReference type="ChEBI" id="CHEBI:15377"/>
        <dbReference type="ChEBI" id="CHEBI:15378"/>
        <dbReference type="ChEBI" id="CHEBI:15379"/>
        <dbReference type="ChEBI" id="CHEBI:57618"/>
        <dbReference type="ChEBI" id="CHEBI:58210"/>
        <dbReference type="ChEBI" id="CHEBI:76311"/>
        <dbReference type="ChEBI" id="CHEBI:76312"/>
    </reaction>
    <physiologicalReaction direction="left-to-right" evidence="25 28">
        <dbReference type="Rhea" id="RHEA:39048"/>
    </physiologicalReaction>
</comment>
<comment type="catalytic activity">
    <molecule>Isoform CYP4F3B</molecule>
    <reaction evidence="8">
        <text>3-hydroxyoctadecanoate + reduced [NADPH--hemoprotein reductase] + O2 = 3,18-dihydroxyoctadecanoate + oxidized [NADPH--hemoprotein reductase] + H2O + H(+)</text>
        <dbReference type="Rhea" id="RHEA:39735"/>
        <dbReference type="Rhea" id="RHEA-COMP:11964"/>
        <dbReference type="Rhea" id="RHEA-COMP:11965"/>
        <dbReference type="ChEBI" id="CHEBI:15377"/>
        <dbReference type="ChEBI" id="CHEBI:15378"/>
        <dbReference type="ChEBI" id="CHEBI:15379"/>
        <dbReference type="ChEBI" id="CHEBI:57618"/>
        <dbReference type="ChEBI" id="CHEBI:58210"/>
        <dbReference type="ChEBI" id="CHEBI:76614"/>
        <dbReference type="ChEBI" id="CHEBI:76615"/>
    </reaction>
    <physiologicalReaction direction="left-to-right" evidence="27">
        <dbReference type="Rhea" id="RHEA:39736"/>
    </physiologicalReaction>
</comment>
<comment type="catalytic activity">
    <molecule>Isoform CYP4F3B</molecule>
    <reaction evidence="8">
        <text>3-hydroxyhexadecanoate + reduced [NADPH--hemoprotein reductase] + O2 = 3,16-dihydroxyhexadecanoate + oxidized [NADPH--hemoprotein reductase] + H2O + H(+)</text>
        <dbReference type="Rhea" id="RHEA:39731"/>
        <dbReference type="Rhea" id="RHEA-COMP:11964"/>
        <dbReference type="Rhea" id="RHEA-COMP:11965"/>
        <dbReference type="ChEBI" id="CHEBI:15377"/>
        <dbReference type="ChEBI" id="CHEBI:15378"/>
        <dbReference type="ChEBI" id="CHEBI:15379"/>
        <dbReference type="ChEBI" id="CHEBI:57618"/>
        <dbReference type="ChEBI" id="CHEBI:58210"/>
        <dbReference type="ChEBI" id="CHEBI:63904"/>
        <dbReference type="ChEBI" id="CHEBI:76613"/>
    </reaction>
    <physiologicalReaction direction="left-to-right" evidence="27">
        <dbReference type="Rhea" id="RHEA:39732"/>
    </physiologicalReaction>
</comment>
<comment type="cofactor">
    <cofactor evidence="1">
        <name>heme</name>
        <dbReference type="ChEBI" id="CHEBI:30413"/>
    </cofactor>
</comment>
<comment type="activity regulation">
    <text evidence="13">Inhibited by carbon monoxide (CO).</text>
</comment>
<comment type="biophysicochemical properties">
    <molecule>Isoform CYP4F3A</molecule>
    <kinetics>
        <KM evidence="13">0.64 uM for leukotriene B4</KM>
        <KM evidence="13">6.5 uM for 20-hydroxy-leukotriene B4</KM>
        <KM evidence="3">0.68 uM for leukotriene B4</KM>
        <KM evidence="3">185.6 uM for arachidonate</KM>
        <KM evidence="13">17.9 uM for lipoxin B4</KM>
        <KM evidence="13">25.7 uM for 5-HETE</KM>
        <KM evidence="13">40.9 uM for 12-HETE</KM>
        <KM evidence="13">49.5 uM for 5-HEPE</KM>
        <KM evidence="13">14.2 uM for 12-hydroxyoctadecanoate</KM>
        <KM evidence="13">22.8 uM for (12R)-hydroxy-(9Z)-octadecenoate</KM>
        <KM evidence="4">6.3 uM for 9(10)-epoxyoctadecanoate</KM>
        <KM evidence="4">46.6 uM for 9(10)-epoxy-(12Z)-octadecenoate</KM>
        <KM evidence="4">61.8 uM for 12(13)-epoxy-(9Z)-octadecenoate</KM>
        <KM evidence="9">0.6 uM for 22-hydroxydocosanoate</KM>
        <Vmax evidence="13">34.0 nmol/min/nmol enzyme toward leukotriene B4</Vmax>
        <Vmax evidence="13">66.7 nmol/min/nmol enzyme toward 20-hydroxy-leukotriene B4</Vmax>
        <Vmax evidence="3">32.8 pmol/min/pmol enzyme toward leukotriene B4</Vmax>
        <Vmax evidence="3">11.5 pmol/min/pmol enzyme toward arachidonate</Vmax>
        <Vmax evidence="13">38.5 nmol/min/nmol enzyme toward lipoxin B4</Vmax>
        <Vmax evidence="13">21.6 nmol/min/nmol enzyme toward 5-HETE</Vmax>
        <Vmax evidence="13">43.2 nmol/min/nmol enzyme toward 12-HETE</Vmax>
        <Vmax evidence="13">95.1 nmol/min/nmol enzyme toward 5-HEPE</Vmax>
        <Vmax evidence="13">54.5 nmol/min/nmol enzyme toward 12-hydroxyoctadecanoate</Vmax>
        <Vmax evidence="13">19.0 nmol/min/nmol enzyme toward (12R)-hydroxy-(9Z)-octadecenoate</Vmax>
        <Vmax evidence="4">10.8 nmol/min/nmol enzyme toward 9(10)-epoxyoctadecanoate</Vmax>
        <Vmax evidence="4">21.2 nmol/min/nmol enzyme toward 9(10)-epoxy-(12Z)-octadecenoate</Vmax>
        <Vmax evidence="4">3.0 nmol/min/nmol enzyme toward 12(13)-epoxy-(9Z)-octadecenoate</Vmax>
        <Vmax evidence="9">0.2 pmol/min/pmol enzyme toward 22-hydroxydocosanoate</Vmax>
    </kinetics>
    <phDependence>
        <text evidence="13">Optimum pH is 7.5.</text>
    </phDependence>
</comment>
<comment type="biophysicochemical properties">
    <molecule>Isoform CYP4F3B</molecule>
    <kinetics>
        <KM evidence="3">20.6 uM for leukotriene B4</KM>
        <KM evidence="3">22 uM for arachidonate</KM>
        <KM evidence="4">35.7 uM for 9(10)-epoxyoctadecanoate</KM>
        <KM evidence="4">108.1 uM for 9(10)-epoxy-(12Z)-octadecenoate</KM>
        <KM evidence="4">100.6 uM for 12(13)-epoxy-(9Z)-octadecenoate</KM>
        <KM evidence="6">1.6 uM for docosanoate</KM>
        <KM evidence="6">3.8 uM for tetracosanoate</KM>
        <KM evidence="6">1.3 uM for hexacosanoate</KM>
        <KM evidence="9">13.1 uM for 22-hydroxydocosanoate</KM>
        <KM evidence="9">5.2 uM for 26-hydroxyhexacosanoate</KM>
        <Vmax evidence="3">23.3 pmol/min/pmol enzyme toward leukotriene B4</Vmax>
        <Vmax evidence="3">13.3 pmol/min/pmol enzyme toward arachidonate</Vmax>
        <Vmax evidence="4">13.2 nmol/min/nmol enzyme toward 9(10)-epoxyoctadecanoate</Vmax>
        <Vmax evidence="4">15.02 nmol/min/nmol enzyme toward 9(10)-epoxy-(12Z)-octadecenoate</Vmax>
        <Vmax evidence="4">3.93 nmol/min/nmol enzyme toward 12(13)-epoxy-(9Z)-octadecenoate</Vmax>
        <Vmax evidence="6">5.0 pmol/min/pmol enzyme toward docosanoate</Vmax>
        <Vmax evidence="6">9.8 pmol/min/pmol enzyme toward tetracosanoate</Vmax>
        <Vmax evidence="6">2.2 pmol/min/pmol enzyme toward hexacosanoate</Vmax>
        <Vmax evidence="9">0.3 pmol/min/pmol enzyme toward 22-hydroxydocosanoate</Vmax>
        <Vmax evidence="9">0.8 pmol/min/pmol enzyme toward 26-hydroxyhexacosanoate</Vmax>
        <text evidence="6">The omega-hydroxylation of VLCFAs follows dual-enzyme Michaelis-Menten kinetics, suggesting simultaneous binding of two substrate molecules. The high affinity Michaelis-Menten constants are shown.</text>
    </kinetics>
</comment>
<comment type="pathway">
    <molecule>Isoform CYP4F3A</molecule>
    <text evidence="13">Lipid metabolism; leukotriene B4 degradation.</text>
</comment>
<comment type="pathway">
    <text evidence="3">Lipid metabolism; arachidonate metabolism.</text>
</comment>
<comment type="subcellular location">
    <subcellularLocation>
        <location evidence="21">Endoplasmic reticulum membrane</location>
        <topology evidence="2">Single-pass membrane protein</topology>
    </subcellularLocation>
    <subcellularLocation>
        <location evidence="21">Microsome membrane</location>
        <topology evidence="2">Single-pass membrane protein</topology>
    </subcellularLocation>
</comment>
<comment type="alternative products">
    <event type="alternative promoter"/>
    <event type="alternative splicing"/>
    <isoform>
        <id>Q08477-1</id>
        <name>CYP4F3A</name>
        <sequence type="displayed"/>
    </isoform>
    <isoform>
        <id>Q08477-2</id>
        <name>CYP4F3B</name>
        <sequence type="described" ref="VSP_047193"/>
    </isoform>
</comment>
<comment type="tissue specificity">
    <molecule>Isoform CYP4F3A</molecule>
    <text evidence="3">Selectively expressed in blood neutrophils and bone marrow cells. Coexpressed with CYP4F3B in prostate, ileum and trachea.</text>
</comment>
<comment type="tissue specificity">
    <molecule>Isoform CYP4F3B</molecule>
    <text evidence="3">Selectively expressed in liver and kidney. It is also the predominant CYP4F isoform in trachea and tissues of the gastrointestinal tract.</text>
</comment>
<comment type="similarity">
    <text evidence="20">Belongs to the cytochrome P450 family.</text>
</comment>
<keyword id="KW-0877">Alternative promoter usage</keyword>
<keyword id="KW-0025">Alternative splicing</keyword>
<keyword id="KW-0256">Endoplasmic reticulum</keyword>
<keyword id="KW-0276">Fatty acid metabolism</keyword>
<keyword id="KW-0349">Heme</keyword>
<keyword id="KW-0408">Iron</keyword>
<keyword id="KW-0443">Lipid metabolism</keyword>
<keyword id="KW-0472">Membrane</keyword>
<keyword id="KW-0479">Metal-binding</keyword>
<keyword id="KW-0492">Microsome</keyword>
<keyword id="KW-0503">Monooxygenase</keyword>
<keyword id="KW-0560">Oxidoreductase</keyword>
<keyword id="KW-1267">Proteomics identification</keyword>
<keyword id="KW-1185">Reference proteome</keyword>
<keyword id="KW-0812">Transmembrane</keyword>
<keyword id="KW-1133">Transmembrane helix</keyword>